<keyword id="KW-0002">3D-structure</keyword>
<keyword id="KW-0948">Aicardi-Goutieres syndrome</keyword>
<keyword id="KW-0025">Alternative splicing</keyword>
<keyword id="KW-0051">Antiviral defense</keyword>
<keyword id="KW-0067">ATP-binding</keyword>
<keyword id="KW-0963">Cytoplasm</keyword>
<keyword id="KW-0219">Diabetes mellitus</keyword>
<keyword id="KW-0225">Disease variant</keyword>
<keyword id="KW-0347">Helicase</keyword>
<keyword id="KW-0945">Host-virus interaction</keyword>
<keyword id="KW-0378">Hydrolase</keyword>
<keyword id="KW-0391">Immunity</keyword>
<keyword id="KW-0399">Innate immunity</keyword>
<keyword id="KW-1017">Isopeptide bond</keyword>
<keyword id="KW-0479">Metal-binding</keyword>
<keyword id="KW-0496">Mitochondrion</keyword>
<keyword id="KW-0547">Nucleotide-binding</keyword>
<keyword id="KW-0539">Nucleus</keyword>
<keyword id="KW-0597">Phosphoprotein</keyword>
<keyword id="KW-1267">Proteomics identification</keyword>
<keyword id="KW-1185">Reference proteome</keyword>
<keyword id="KW-0677">Repeat</keyword>
<keyword id="KW-0694">RNA-binding</keyword>
<keyword id="KW-0832">Ubl conjugation</keyword>
<keyword id="KW-0862">Zinc</keyword>
<name>IFIH1_HUMAN</name>
<sequence>MSNGYSTDENFRYLISCFRARVKMYIQVEPVLDYLTFLPAEVKEQIQRTVATSGNMQAVELLLSTLEKGVWHLGWTREFVEALRRTGSPLAARYMNPELTDLPSPSFENAHDEYLQLLNLLQPTLVDKLLVRDVLDKCMEEELLTIEDRNRIAAAENNGNESGVRELLKRIVQKENWFSAFLNVLRQTGNNELVQELTGSDCSESNAEIENLSQVDGPQVEEQLLSTTVQPNLEKEVWGMENNSSESSFADSSVVSESDTSLAEGSVSCLDESLGHNSNMGSDSGTMGSDSDEENVAARASPEPELQLRPYQMEVAQPALEGKNIIICLPTGSGKTRVAVYIAKDHLDKKKKASEPGKVIVLVNKVLLVEQLFRKEFQPFLKKWYRVIGLSGDTQLKISFPEVVKSCDIIISTAQILENSLLNLENGEDAGVQLSDFSLIIIDECHHTNKEAVYNNIMRHYLMQKLKNNRLKKENKPVIPLPQILGLTASPGVGGATKQAKAEEHILKLCANLDAFTIKTVKENLDQLKNQIQEPCKKFAIADATREDPFKEKLLEIMTRIQTYCQMSPMSDFGTQPYEQWAIQMEKKAAKEGNRKERVCAEHLRKYNEALQINDTIRMIDAYTHLETFYNEEKDKKFAVIEDDSDEGGDDEYCDGDEDEDDLKKPLKLDETDRFLMTLFFENNKMLKRLAENPEYENEKLTKLRNTIMEQYTRTEESARGIIFTKTRQSAYALSQWITENEKFAEVGVKAHHLIGAGHSSEFKPMTQNEQKEVISKFRTGKINLLIATTVAEEGLDIKECNIVIRYGLVTNEIAMVQARGRARADESTYVLVAHSGSGVIEHETVNDFREKMMYKAIHCVQNMKPEEYAHKILELQMQSIMEKKMKTKRNIAKHYKNNPSLITFLCKNCSVLACSGEDIHVIEKMHHVNMTPEFKELYIVRENKALQKKCADYQINGEIICKCGQAWGTMMVHKGLDLPCLKIRNFVVVFKNNSTKKQYKKWVELPITFPNLDYSECCLFSDED</sequence>
<gene>
    <name evidence="61" type="primary">IFIH1</name>
    <name evidence="56 57" type="synonym">MDA5</name>
    <name type="synonym">RH116</name>
</gene>
<proteinExistence type="evidence at protein level"/>
<accession>Q9BYX4</accession>
<accession>Q2NKL6</accession>
<accession>Q6DC96</accession>
<accession>Q86X56</accession>
<accession>Q96MX8</accession>
<accession>Q9H3G6</accession>
<protein>
    <recommendedName>
        <fullName evidence="58">Interferon-induced helicase C domain-containing protein 1</fullName>
        <ecNumber evidence="19 34">3.6.4.13</ecNumber>
    </recommendedName>
    <alternativeName>
        <fullName>Clinically amyopathic dermatomyositis autoantigen 140 kDa</fullName>
        <shortName>CADM-140 autoantigen</shortName>
    </alternativeName>
    <alternativeName>
        <fullName>Helicase with 2 CARD domains</fullName>
        <shortName>Helicard</shortName>
    </alternativeName>
    <alternativeName>
        <fullName>Interferon-induced with helicase C domain protein 1</fullName>
    </alternativeName>
    <alternativeName>
        <fullName>Melanoma differentiation-associated protein 5</fullName>
        <shortName>MDA-5</shortName>
    </alternativeName>
    <alternativeName>
        <fullName>Murabutide down-regulated protein</fullName>
    </alternativeName>
    <alternativeName>
        <fullName>RIG-I-like receptor 2</fullName>
        <shortName>RLR-2</shortName>
    </alternativeName>
    <alternativeName>
        <fullName>RNA helicase-DEAD box protein 116</fullName>
    </alternativeName>
</protein>
<feature type="chain" id="PRO_0000102012" description="Interferon-induced helicase C domain-containing protein 1">
    <location>
        <begin position="1"/>
        <end position="1025"/>
    </location>
</feature>
<feature type="domain" description="CARD 1">
    <location>
        <begin position="7"/>
        <end position="97"/>
    </location>
</feature>
<feature type="domain" description="CARD 2">
    <location>
        <begin position="110"/>
        <end position="190"/>
    </location>
</feature>
<feature type="domain" description="Helicase ATP-binding" evidence="3">
    <location>
        <begin position="316"/>
        <end position="509"/>
    </location>
</feature>
<feature type="domain" description="Helicase C-terminal" evidence="4">
    <location>
        <begin position="700"/>
        <end position="882"/>
    </location>
</feature>
<feature type="domain" description="RLR CTR" evidence="5">
    <location>
        <begin position="893"/>
        <end position="1020"/>
    </location>
</feature>
<feature type="region of interest" description="Disordered" evidence="6">
    <location>
        <begin position="271"/>
        <end position="307"/>
    </location>
</feature>
<feature type="region of interest" description="Disordered" evidence="6">
    <location>
        <begin position="640"/>
        <end position="662"/>
    </location>
</feature>
<feature type="compositionally biased region" description="Low complexity" evidence="6">
    <location>
        <begin position="277"/>
        <end position="289"/>
    </location>
</feature>
<feature type="compositionally biased region" description="Acidic residues" evidence="6">
    <location>
        <begin position="641"/>
        <end position="661"/>
    </location>
</feature>
<feature type="binding site" evidence="5">
    <location>
        <position position="907"/>
    </location>
    <ligand>
        <name>Zn(2+)</name>
        <dbReference type="ChEBI" id="CHEBI:29105"/>
    </ligand>
</feature>
<feature type="binding site" evidence="5">
    <location>
        <position position="910"/>
    </location>
    <ligand>
        <name>Zn(2+)</name>
        <dbReference type="ChEBI" id="CHEBI:29105"/>
    </ligand>
</feature>
<feature type="binding site" evidence="5">
    <location>
        <position position="962"/>
    </location>
    <ligand>
        <name>Zn(2+)</name>
        <dbReference type="ChEBI" id="CHEBI:29105"/>
    </ligand>
</feature>
<feature type="binding site" evidence="5">
    <location>
        <position position="964"/>
    </location>
    <ligand>
        <name>Zn(2+)</name>
        <dbReference type="ChEBI" id="CHEBI:29105"/>
    </ligand>
</feature>
<feature type="site" description="Cleavage" evidence="1">
    <location>
        <begin position="208"/>
        <end position="209"/>
    </location>
</feature>
<feature type="site" description="Cleavage" evidence="1">
    <location>
        <begin position="216"/>
        <end position="217"/>
    </location>
</feature>
<feature type="site" description="Cleavage" evidence="1">
    <location>
        <begin position="251"/>
        <end position="252"/>
    </location>
</feature>
<feature type="modified residue" description="Phosphoserine" evidence="36 54">
    <location>
        <position position="88"/>
    </location>
</feature>
<feature type="modified residue" description="Phosphoserine" evidence="2">
    <location>
        <position position="289"/>
    </location>
</feature>
<feature type="modified residue" description="Phosphoserine" evidence="2">
    <location>
        <position position="291"/>
    </location>
</feature>
<feature type="modified residue" description="Phosphoserine" evidence="2">
    <location>
        <position position="301"/>
    </location>
</feature>
<feature type="modified residue" description="Phosphoserine" evidence="2">
    <location>
        <position position="645"/>
    </location>
</feature>
<feature type="modified residue" description="Phosphoserine; by RIOK3" evidence="42">
    <location>
        <position position="828"/>
    </location>
</feature>
<feature type="cross-link" description="Glycyl lysine isopeptide (Lys-Gly) (interchain with G-Cter in ISG15)" evidence="54">
    <location>
        <position position="23"/>
    </location>
</feature>
<feature type="cross-link" description="Glycyl lysine isopeptide (Lys-Gly) (interchain with G-Cter in ISG15)" evidence="54">
    <location>
        <position position="43"/>
    </location>
</feature>
<feature type="splice variant" id="VSP_013337" description="In isoform 2." evidence="55">
    <original>EIENLSQVDGPQVE</original>
    <variation>GICNFTEEDSSNSA</variation>
    <location>
        <begin position="208"/>
        <end position="221"/>
    </location>
</feature>
<feature type="splice variant" id="VSP_013338" description="In isoform 2." evidence="55">
    <location>
        <begin position="222"/>
        <end position="1025"/>
    </location>
</feature>
<feature type="sequence variant" id="VAR_071375" description="In AGS7; enhances the interferon signaling pathway activation; enhances the stability of filament formation; enhances dsRNA binding activity; no loss of ATP hydrolysis; dbSNP:rs587777447." evidence="39">
    <original>R</original>
    <variation>G</variation>
    <location>
        <position position="337"/>
    </location>
</feature>
<feature type="sequence variant" id="VAR_087007" description="In IMD95; does not bind the double-stranded RNA analog poly(I:C); loss of IFNB1 and NFKB promoter activation after stimulation with poly(I:C), when tested in a luciferase reporter assay; dbSNP:rs117608083." evidence="46">
    <original>K</original>
    <variation>E</variation>
    <location>
        <position position="365"/>
    </location>
</feature>
<feature type="sequence variant" id="VAR_071376" description="In AGS7; enhances IFNB1 promoter activation; loss of ligand-induced responsiveness; dbSNP:rs587777576." evidence="40">
    <original>L</original>
    <variation>F</variation>
    <location>
        <position position="372"/>
    </location>
</feature>
<feature type="sequence variant" id="VAR_071377" description="In AGS7; enhances the interferon signaling pathway activation; enhances the stability of filament formation; enhances dsRNA binding activity; no loss of ATP hydrolysis; dbSNP:rs587777449." evidence="39">
    <original>D</original>
    <variation>V</variation>
    <location>
        <position position="393"/>
    </location>
</feature>
<feature type="sequence variant" id="VAR_071378" description="In AGS7; enhances IFNB1 promoter activation; loss of ligand-induced responsiveness; dbSNP:rs587777575." evidence="40">
    <original>A</original>
    <variation>T</variation>
    <location>
        <position position="452"/>
    </location>
</feature>
<feature type="sequence variant" id="VAR_031226" description="In dbSNP:rs10930046.">
    <original>H</original>
    <variation>R</variation>
    <location>
        <position position="460"/>
    </location>
</feature>
<feature type="sequence variant" id="VAR_071379" description="In AGS7; enhances the interferon signaling pathway activation; enhances the stability of filament formation; enhances dsRNA binding activity; no loss of ATP hydrolysis; dbSNP:rs672601336." evidence="39">
    <original>G</original>
    <variation>R</variation>
    <location>
        <position position="495"/>
    </location>
</feature>
<feature type="sequence variant" id="VAR_071380" description="In AGS7; enhances the interferon signaling pathway activation; enhances the stability of filament formation; enhances dsRNA binding activity; no loss of ATP hydrolysis; dbSNP:rs587777445." evidence="39">
    <original>R</original>
    <variation>Q</variation>
    <location>
        <position position="720"/>
    </location>
</feature>
<feature type="sequence variant" id="VAR_071381" description="In AGS7; enhances the interferon signaling pathway activation; enhances the stability of filament formation; enhances dsRNA binding activity; no loss of ATP hydrolysis; dbSNP:rs587777448." evidence="39">
    <original>R</original>
    <variation>C</variation>
    <location>
        <position position="779"/>
    </location>
</feature>
<feature type="sequence variant" id="VAR_071382" description="In AGS7; enhances the interferon signaling pathway activation; enhances the stability of filament formation; enhances dsRNA binding activity; enhances IFNB1 promoter activation; no loss of ATP hydrolysis; dbSNP:rs587777446." evidence="39 40">
    <original>R</original>
    <variation>H</variation>
    <location>
        <position position="779"/>
    </location>
</feature>
<feature type="sequence variant" id="VAR_073666" description="In SGMRT1; gain-of-function mutation resulting in enhanced INFB1 induction; dbSNP:rs376048533." evidence="41">
    <original>R</original>
    <variation>Q</variation>
    <location>
        <position position="822"/>
    </location>
</feature>
<feature type="sequence variant" id="VAR_021594" description="In dbSNP:rs3747517." evidence="9 10 11">
    <original>H</original>
    <variation>R</variation>
    <location>
        <position position="843"/>
    </location>
</feature>
<feature type="sequence variant" id="VAR_087008" description="In IMD95; no protein detected by Western blot in homozygous patient cells." evidence="47">
    <location>
        <begin position="889"/>
        <end position="1025"/>
    </location>
</feature>
<feature type="sequence variant" id="VAR_021595" description="Risk factor for T1D19; dbSNP:rs1990760." evidence="10 11 15">
    <original>A</original>
    <variation>T</variation>
    <location>
        <position position="946"/>
    </location>
</feature>
<feature type="mutagenesis site" description="Loss of ISGylation, loss of oligomerization, strongly reduced signaling activity and IFNB induction, loss of virus replication restriction, no effect on phosphorylation or RNA-binding; when associated with A-43." evidence="54">
    <original>K</original>
    <variation>A</variation>
    <location>
        <position position="23"/>
    </location>
</feature>
<feature type="mutagenesis site" description="Loss of ISGylation, loss of oligomerization, strongly reduced signaling activity and IFNB induction, loss of virus replication restriction, no effect on phosphorylation or RNA-binding; when associated with A-23." evidence="54">
    <original>K</original>
    <variation>A</variation>
    <location>
        <position position="43"/>
    </location>
</feature>
<feature type="mutagenesis site" description="No effect on ISGylation or signaling activity and IFNB induction." evidence="54">
    <original>K</original>
    <variation>A</variation>
    <location>
        <position position="68"/>
    </location>
</feature>
<feature type="mutagenesis site" description="Loss of oligomerization." evidence="54">
    <original>GW</original>
    <variation>AA</variation>
    <location>
        <begin position="74"/>
        <end position="75"/>
    </location>
</feature>
<feature type="mutagenesis site" description="Increases ISGylation. No effect on signaling activity and IFNB induction." evidence="36 54">
    <original>S</original>
    <variation>A</variation>
    <location>
        <position position="88"/>
    </location>
</feature>
<feature type="mutagenesis site" description="Loss of signaling activity and IFNB induction. Reduced ISGylation. Loss of virus replication restriction." evidence="36 54">
    <original>S</original>
    <variation>E</variation>
    <variation>D</variation>
    <location>
        <position position="88"/>
    </location>
</feature>
<feature type="mutagenesis site" description="No effect on signaling activity and IFNB induction." evidence="36 54">
    <original>S</original>
    <variation>R</variation>
    <location>
        <position position="88"/>
    </location>
</feature>
<feature type="mutagenesis site" description="No cleavage and no acceleration of DNA degradation." evidence="8">
    <original>D</original>
    <variation>A</variation>
    <location>
        <position position="251"/>
    </location>
</feature>
<feature type="mutagenesis site" description="Loss of dsRNA-induced ATPase activity. No effect on RNA binding. Changed MDA-5 signaling pathway." evidence="19">
    <original>K</original>
    <variation>A</variation>
    <location>
        <position position="335"/>
    </location>
</feature>
<feature type="mutagenesis site" description="Loss of dsRNA-induced ATPase activity. No effect on RNA binding. Changed MDA-5 signaling pathway." evidence="19">
    <original>DECH</original>
    <variation>AACA</variation>
    <location>
        <begin position="443"/>
        <end position="446"/>
    </location>
</feature>
<feature type="mutagenesis site" description="No acceleration of DNA degradation, no binding to ATP, and no helicase activity." evidence="8">
    <original>E</original>
    <variation>A</variation>
    <location>
        <position position="444"/>
    </location>
</feature>
<feature type="mutagenesis site" description="Loss of dsRNA-induced ATPase activity. No effect on RNA binding. Changed MDA-5 signaling pathway." evidence="19">
    <original>TAS</original>
    <variation>AAA</variation>
    <location>
        <begin position="488"/>
        <end position="490"/>
    </location>
</feature>
<feature type="mutagenesis site" description="Loss of dsRNA-induced ATPase activity. Loss of MDA-5 signaling pathway." evidence="19">
    <original>TTVAE</original>
    <variation>ATVAA</variation>
    <location>
        <begin position="789"/>
        <end position="793"/>
    </location>
</feature>
<feature type="mutagenesis site" description="Loss of dsRNA-induced ATPase activity. No effect on MDA-5 signaling pathway." evidence="19">
    <original>QARGR</original>
    <variation>AARGA</variation>
    <location>
        <begin position="818"/>
        <end position="822"/>
    </location>
</feature>
<feature type="mutagenesis site" description="Promotes multimerization after polyI:C stimulation; greatly enhances signaling." evidence="42">
    <original>S</original>
    <variation>A</variation>
    <location>
        <position position="828"/>
    </location>
</feature>
<feature type="mutagenesis site" description="Inhibits multimerization after polyI:C stimulation." evidence="42">
    <original>S</original>
    <variation>D</variation>
    <location>
        <position position="828"/>
    </location>
</feature>
<feature type="mutagenesis site" description="Moderately increases signaling." evidence="42">
    <original>T</original>
    <variation>A</variation>
    <location>
        <position position="829"/>
    </location>
</feature>
<feature type="mutagenesis site" description="Loss of oligomerization." evidence="54">
    <original>IE</original>
    <variation>RR</variation>
    <location>
        <begin position="841"/>
        <end position="842"/>
    </location>
</feature>
<feature type="mutagenesis site" description="Loss of oligomerization." evidence="54">
    <original>DF</original>
    <variation>AA</variation>
    <location>
        <begin position="848"/>
        <end position="849"/>
    </location>
</feature>
<feature type="sequence conflict" description="In Ref. 2; AAG54076." evidence="58" ref="2">
    <original>L</original>
    <variation>F</variation>
    <location>
        <position position="439"/>
    </location>
</feature>
<feature type="sequence conflict" description="In Ref. 4; BAB71141." evidence="58" ref="4">
    <original>N</original>
    <variation>H</variation>
    <location>
        <position position="475"/>
    </location>
</feature>
<feature type="sequence conflict" description="In Ref. 1; AAG34368." evidence="58" ref="1">
    <original>E</original>
    <variation>K</variation>
    <location>
        <position position="592"/>
    </location>
</feature>
<feature type="sequence conflict" description="In Ref. 2; AAG54076." evidence="58" ref="2">
    <original>R</original>
    <variation>S</variation>
    <location>
        <position position="598"/>
    </location>
</feature>
<feature type="sequence conflict" description="In Ref. 2; AAG54076." evidence="58" ref="2">
    <original>E</original>
    <variation>K</variation>
    <location>
        <position position="609"/>
    </location>
</feature>
<feature type="sequence conflict" description="In Ref. 4; BAB71141." evidence="58" ref="4">
    <original>K</original>
    <variation>R</variation>
    <location>
        <position position="782"/>
    </location>
</feature>
<feature type="helix" evidence="64">
    <location>
        <begin position="8"/>
        <end position="17"/>
    </location>
</feature>
<feature type="helix" evidence="64">
    <location>
        <begin position="19"/>
        <end position="25"/>
    </location>
</feature>
<feature type="helix" evidence="64">
    <location>
        <begin position="28"/>
        <end position="31"/>
    </location>
</feature>
<feature type="turn" evidence="64">
    <location>
        <begin position="32"/>
        <end position="34"/>
    </location>
</feature>
<feature type="helix" evidence="64">
    <location>
        <begin position="40"/>
        <end position="67"/>
    </location>
</feature>
<feature type="helix" evidence="64">
    <location>
        <begin position="75"/>
        <end position="85"/>
    </location>
</feature>
<feature type="helix" evidence="64">
    <location>
        <begin position="89"/>
        <end position="93"/>
    </location>
</feature>
<feature type="strand" evidence="64">
    <location>
        <begin position="97"/>
        <end position="99"/>
    </location>
</feature>
<feature type="helix" evidence="64">
    <location>
        <begin position="105"/>
        <end position="128"/>
    </location>
</feature>
<feature type="helix" evidence="64">
    <location>
        <begin position="131"/>
        <end position="141"/>
    </location>
</feature>
<feature type="helix" evidence="64">
    <location>
        <begin position="146"/>
        <end position="155"/>
    </location>
</feature>
<feature type="turn" evidence="64">
    <location>
        <begin position="156"/>
        <end position="158"/>
    </location>
</feature>
<feature type="helix" evidence="64">
    <location>
        <begin position="160"/>
        <end position="170"/>
    </location>
</feature>
<feature type="helix" evidence="64">
    <location>
        <begin position="171"/>
        <end position="173"/>
    </location>
</feature>
<feature type="helix" evidence="64">
    <location>
        <begin position="177"/>
        <end position="186"/>
    </location>
</feature>
<feature type="turn" evidence="64">
    <location>
        <begin position="187"/>
        <end position="189"/>
    </location>
</feature>
<feature type="helix" evidence="64">
    <location>
        <begin position="191"/>
        <end position="198"/>
    </location>
</feature>
<feature type="helix" evidence="62">
    <location>
        <begin position="293"/>
        <end position="299"/>
    </location>
</feature>
<feature type="helix" evidence="62">
    <location>
        <begin position="310"/>
        <end position="320"/>
    </location>
</feature>
<feature type="strand" evidence="62">
    <location>
        <begin position="325"/>
        <end position="328"/>
    </location>
</feature>
<feature type="helix" evidence="62">
    <location>
        <begin position="332"/>
        <end position="352"/>
    </location>
</feature>
<feature type="strand" evidence="62">
    <location>
        <begin position="359"/>
        <end position="365"/>
    </location>
</feature>
<feature type="helix" evidence="62">
    <location>
        <begin position="366"/>
        <end position="375"/>
    </location>
</feature>
<feature type="helix" evidence="62">
    <location>
        <begin position="377"/>
        <end position="381"/>
    </location>
</feature>
<feature type="turn" evidence="62">
    <location>
        <begin position="382"/>
        <end position="384"/>
    </location>
</feature>
<feature type="strand" evidence="62">
    <location>
        <begin position="387"/>
        <end position="389"/>
    </location>
</feature>
<feature type="helix" evidence="62">
    <location>
        <begin position="400"/>
        <end position="406"/>
    </location>
</feature>
<feature type="strand" evidence="62">
    <location>
        <begin position="408"/>
        <end position="413"/>
    </location>
</feature>
<feature type="helix" evidence="62">
    <location>
        <begin position="414"/>
        <end position="422"/>
    </location>
</feature>
<feature type="helix" evidence="62">
    <location>
        <begin position="434"/>
        <end position="436"/>
    </location>
</feature>
<feature type="strand" evidence="62">
    <location>
        <begin position="438"/>
        <end position="442"/>
    </location>
</feature>
<feature type="helix" evidence="62">
    <location>
        <begin position="454"/>
        <end position="473"/>
    </location>
</feature>
<feature type="strand" evidence="62">
    <location>
        <begin position="483"/>
        <end position="488"/>
    </location>
</feature>
<feature type="helix" evidence="63">
    <location>
        <begin position="900"/>
        <end position="902"/>
    </location>
</feature>
<feature type="strand" evidence="63">
    <location>
        <begin position="903"/>
        <end position="907"/>
    </location>
</feature>
<feature type="turn" evidence="63">
    <location>
        <begin position="908"/>
        <end position="910"/>
    </location>
</feature>
<feature type="strand" evidence="63">
    <location>
        <begin position="913"/>
        <end position="916"/>
    </location>
</feature>
<feature type="helix" evidence="63">
    <location>
        <begin position="917"/>
        <end position="919"/>
    </location>
</feature>
<feature type="strand" evidence="63">
    <location>
        <begin position="921"/>
        <end position="923"/>
    </location>
</feature>
<feature type="turn" evidence="63">
    <location>
        <begin position="924"/>
        <end position="926"/>
    </location>
</feature>
<feature type="strand" evidence="63">
    <location>
        <begin position="927"/>
        <end position="929"/>
    </location>
</feature>
<feature type="helix" evidence="63">
    <location>
        <begin position="934"/>
        <end position="937"/>
    </location>
</feature>
<feature type="strand" evidence="63">
    <location>
        <begin position="938"/>
        <end position="942"/>
    </location>
</feature>
<feature type="turn" evidence="63">
    <location>
        <begin position="945"/>
        <end position="947"/>
    </location>
</feature>
<feature type="strand" evidence="63">
    <location>
        <begin position="955"/>
        <end position="962"/>
    </location>
</feature>
<feature type="strand" evidence="63">
    <location>
        <begin position="967"/>
        <end position="974"/>
    </location>
</feature>
<feature type="strand" evidence="63">
    <location>
        <begin position="977"/>
        <end position="982"/>
    </location>
</feature>
<feature type="helix" evidence="63">
    <location>
        <begin position="984"/>
        <end position="986"/>
    </location>
</feature>
<feature type="strand" evidence="63">
    <location>
        <begin position="987"/>
        <end position="991"/>
    </location>
</feature>
<feature type="turn" evidence="63">
    <location>
        <begin position="992"/>
        <end position="995"/>
    </location>
</feature>
<feature type="strand" evidence="63">
    <location>
        <begin position="996"/>
        <end position="998"/>
    </location>
</feature>
<feature type="helix" evidence="63">
    <location>
        <begin position="1003"/>
        <end position="1005"/>
    </location>
</feature>
<feature type="helix" evidence="63">
    <location>
        <begin position="1015"/>
        <end position="1017"/>
    </location>
</feature>
<organism>
    <name type="scientific">Homo sapiens</name>
    <name type="common">Human</name>
    <dbReference type="NCBI Taxonomy" id="9606"/>
    <lineage>
        <taxon>Eukaryota</taxon>
        <taxon>Metazoa</taxon>
        <taxon>Chordata</taxon>
        <taxon>Craniata</taxon>
        <taxon>Vertebrata</taxon>
        <taxon>Euteleostomi</taxon>
        <taxon>Mammalia</taxon>
        <taxon>Eutheria</taxon>
        <taxon>Euarchontoglires</taxon>
        <taxon>Primates</taxon>
        <taxon>Haplorrhini</taxon>
        <taxon>Catarrhini</taxon>
        <taxon>Hominidae</taxon>
        <taxon>Homo</taxon>
    </lineage>
</organism>
<reference key="1">
    <citation type="journal article" date="2002" name="Proc. Natl. Acad. Sci. U.S.A.">
        <title>mda-5: an interferon-inducible putative RNA helicase with double-stranded RNA-dependent ATPase activity and melanoma growth-suppressive properties.</title>
        <authorList>
            <person name="Kang D.-C."/>
            <person name="Gopalkrishnan R.V."/>
            <person name="Wu Q."/>
            <person name="Jankowsky E."/>
            <person name="Pyle A.M."/>
            <person name="Fisher P.B."/>
        </authorList>
    </citation>
    <scope>NUCLEOTIDE SEQUENCE [MRNA] (ISOFORM 1)</scope>
    <scope>INDUCTION</scope>
    <scope>SUBCELLULAR LOCATION</scope>
    <scope>TISSUE SPECIFICITY</scope>
    <source>
        <tissue>Melanoma</tissue>
    </source>
</reference>
<reference key="2">
    <citation type="journal article" date="2003" name="J. Gen. Virol.">
        <title>A novel cellular RNA helicase, RH116, differentially regulates cell growth, programmed cell death and human immunodeficiency virus type 1 replication.</title>
        <authorList>
            <person name="Cocude C."/>
            <person name="Truong M.-J."/>
            <person name="Billaut-Mulot O."/>
            <person name="Delsart V."/>
            <person name="Darcissac E."/>
            <person name="Capron A."/>
            <person name="Mouton Y."/>
            <person name="Bahr G.M."/>
        </authorList>
    </citation>
    <scope>NUCLEOTIDE SEQUENCE [MRNA] (ISOFORM 1)</scope>
    <scope>FUNCTION</scope>
    <scope>SUBCELLULAR LOCATION</scope>
    <scope>TISSUE SPECIFICITY</scope>
    <scope>VARIANT ARG-843</scope>
    <source>
        <tissue>Spleen</tissue>
    </source>
</reference>
<reference key="3">
    <citation type="journal article" date="2004" name="Genome Res.">
        <title>The status, quality, and expansion of the NIH full-length cDNA project: the Mammalian Gene Collection (MGC).</title>
        <authorList>
            <consortium name="The MGC Project Team"/>
        </authorList>
    </citation>
    <scope>NUCLEOTIDE SEQUENCE [LARGE SCALE MRNA] (ISOFORMS 1 AND 2)</scope>
    <scope>VARIANTS ARG-843 AND THR-946</scope>
    <source>
        <tissue>Uterus</tissue>
    </source>
</reference>
<reference key="4">
    <citation type="journal article" date="2004" name="Nat. Genet.">
        <title>Complete sequencing and characterization of 21,243 full-length human cDNAs.</title>
        <authorList>
            <person name="Ota T."/>
            <person name="Suzuki Y."/>
            <person name="Nishikawa T."/>
            <person name="Otsuki T."/>
            <person name="Sugiyama T."/>
            <person name="Irie R."/>
            <person name="Wakamatsu A."/>
            <person name="Hayashi K."/>
            <person name="Sato H."/>
            <person name="Nagai K."/>
            <person name="Kimura K."/>
            <person name="Makita H."/>
            <person name="Sekine M."/>
            <person name="Obayashi M."/>
            <person name="Nishi T."/>
            <person name="Shibahara T."/>
            <person name="Tanaka T."/>
            <person name="Ishii S."/>
            <person name="Yamamoto J."/>
            <person name="Saito K."/>
            <person name="Kawai Y."/>
            <person name="Isono Y."/>
            <person name="Nakamura Y."/>
            <person name="Nagahari K."/>
            <person name="Murakami K."/>
            <person name="Yasuda T."/>
            <person name="Iwayanagi T."/>
            <person name="Wagatsuma M."/>
            <person name="Shiratori A."/>
            <person name="Sudo H."/>
            <person name="Hosoiri T."/>
            <person name="Kaku Y."/>
            <person name="Kodaira H."/>
            <person name="Kondo H."/>
            <person name="Sugawara M."/>
            <person name="Takahashi M."/>
            <person name="Kanda K."/>
            <person name="Yokoi T."/>
            <person name="Furuya T."/>
            <person name="Kikkawa E."/>
            <person name="Omura Y."/>
            <person name="Abe K."/>
            <person name="Kamihara K."/>
            <person name="Katsuta N."/>
            <person name="Sato K."/>
            <person name="Tanikawa M."/>
            <person name="Yamazaki M."/>
            <person name="Ninomiya K."/>
            <person name="Ishibashi T."/>
            <person name="Yamashita H."/>
            <person name="Murakawa K."/>
            <person name="Fujimori K."/>
            <person name="Tanai H."/>
            <person name="Kimata M."/>
            <person name="Watanabe M."/>
            <person name="Hiraoka S."/>
            <person name="Chiba Y."/>
            <person name="Ishida S."/>
            <person name="Ono Y."/>
            <person name="Takiguchi S."/>
            <person name="Watanabe S."/>
            <person name="Yosida M."/>
            <person name="Hotuta T."/>
            <person name="Kusano J."/>
            <person name="Kanehori K."/>
            <person name="Takahashi-Fujii A."/>
            <person name="Hara H."/>
            <person name="Tanase T.-O."/>
            <person name="Nomura Y."/>
            <person name="Togiya S."/>
            <person name="Komai F."/>
            <person name="Hara R."/>
            <person name="Takeuchi K."/>
            <person name="Arita M."/>
            <person name="Imose N."/>
            <person name="Musashino K."/>
            <person name="Yuuki H."/>
            <person name="Oshima A."/>
            <person name="Sasaki N."/>
            <person name="Aotsuka S."/>
            <person name="Yoshikawa Y."/>
            <person name="Matsunawa H."/>
            <person name="Ichihara T."/>
            <person name="Shiohata N."/>
            <person name="Sano S."/>
            <person name="Moriya S."/>
            <person name="Momiyama H."/>
            <person name="Satoh N."/>
            <person name="Takami S."/>
            <person name="Terashima Y."/>
            <person name="Suzuki O."/>
            <person name="Nakagawa S."/>
            <person name="Senoh A."/>
            <person name="Mizoguchi H."/>
            <person name="Goto Y."/>
            <person name="Shimizu F."/>
            <person name="Wakebe H."/>
            <person name="Hishigaki H."/>
            <person name="Watanabe T."/>
            <person name="Sugiyama A."/>
            <person name="Takemoto M."/>
            <person name="Kawakami B."/>
            <person name="Yamazaki M."/>
            <person name="Watanabe K."/>
            <person name="Kumagai A."/>
            <person name="Itakura S."/>
            <person name="Fukuzumi Y."/>
            <person name="Fujimori Y."/>
            <person name="Komiyama M."/>
            <person name="Tashiro H."/>
            <person name="Tanigami A."/>
            <person name="Fujiwara T."/>
            <person name="Ono T."/>
            <person name="Yamada K."/>
            <person name="Fujii Y."/>
            <person name="Ozaki K."/>
            <person name="Hirao M."/>
            <person name="Ohmori Y."/>
            <person name="Kawabata A."/>
            <person name="Hikiji T."/>
            <person name="Kobatake N."/>
            <person name="Inagaki H."/>
            <person name="Ikema Y."/>
            <person name="Okamoto S."/>
            <person name="Okitani R."/>
            <person name="Kawakami T."/>
            <person name="Noguchi S."/>
            <person name="Itoh T."/>
            <person name="Shigeta K."/>
            <person name="Senba T."/>
            <person name="Matsumura K."/>
            <person name="Nakajima Y."/>
            <person name="Mizuno T."/>
            <person name="Morinaga M."/>
            <person name="Sasaki M."/>
            <person name="Togashi T."/>
            <person name="Oyama M."/>
            <person name="Hata H."/>
            <person name="Watanabe M."/>
            <person name="Komatsu T."/>
            <person name="Mizushima-Sugano J."/>
            <person name="Satoh T."/>
            <person name="Shirai Y."/>
            <person name="Takahashi Y."/>
            <person name="Nakagawa K."/>
            <person name="Okumura K."/>
            <person name="Nagase T."/>
            <person name="Nomura N."/>
            <person name="Kikuchi H."/>
            <person name="Masuho Y."/>
            <person name="Yamashita R."/>
            <person name="Nakai K."/>
            <person name="Yada T."/>
            <person name="Nakamura Y."/>
            <person name="Ohara O."/>
            <person name="Isogai T."/>
            <person name="Sugano S."/>
        </authorList>
    </citation>
    <scope>NUCLEOTIDE SEQUENCE [MRNA] OF 475-1025 (ISOFORM 1)</scope>
    <scope>VARIANTS ARG-843 AND THR-946</scope>
</reference>
<reference key="5">
    <citation type="journal article" date="2002" name="Curr. Biol.">
        <title>Overexpression of Helicard, a CARD-containing helicase cleaved during apoptosis, accelerates DNA degradation.</title>
        <authorList>
            <person name="Kovacsovics M."/>
            <person name="Martinon F."/>
            <person name="Micheau O."/>
            <person name="Bodmer J.-L."/>
            <person name="Hofmann K."/>
            <person name="Tschopp J."/>
        </authorList>
    </citation>
    <scope>MUTAGENESIS OF ASP-251 AND GLU-444</scope>
    <scope>TISSUE SPECIFICITY</scope>
</reference>
<reference key="6">
    <citation type="journal article" date="2002" name="Curr. Biol.">
        <authorList>
            <person name="Kovacsovics M."/>
            <person name="Martinon F."/>
            <person name="Micheau O."/>
            <person name="Bodmer J.-L."/>
            <person name="Hofmann K."/>
            <person name="Tschopp J."/>
        </authorList>
    </citation>
    <scope>ERRATUM OF PUBMED:12015121</scope>
</reference>
<reference key="7">
    <citation type="journal article" date="2004" name="Proc. Natl. Acad. Sci. U.S.A.">
        <title>The V proteins of paramyxoviruses bind the IFN-inducible RNA helicase, mda-5, and inhibit its activation of the IFN-beta promoter.</title>
        <authorList>
            <person name="Andrejeva J."/>
            <person name="Childs K.S."/>
            <person name="Young D.F."/>
            <person name="Carlos T.S."/>
            <person name="Stock N."/>
            <person name="Goodbourn S."/>
            <person name="Randall R.E."/>
        </authorList>
    </citation>
    <scope>INTERACTION WITH PARAMYXOVIRUSES V PROTEIN (MICROBIAL INFECTION)</scope>
</reference>
<reference key="8">
    <citation type="journal article" date="2005" name="Nat. Immunol.">
        <title>IPS-1, an adaptor triggering RIG-I- and Mda5-mediated type I interferon induction.</title>
        <authorList>
            <person name="Kawai T."/>
            <person name="Takahashi K."/>
            <person name="Sato S."/>
            <person name="Coban C."/>
            <person name="Kumar H."/>
            <person name="Kato H."/>
            <person name="Ishii K.J."/>
            <person name="Takeuchi O."/>
            <person name="Akira S."/>
        </authorList>
    </citation>
    <scope>INTERACTION WITH MAVS/IPS1</scope>
</reference>
<reference key="9">
    <citation type="journal article" date="2005" name="Nature">
        <title>Cardif is an adaptor protein in the RIG-I antiviral pathway and is targeted by hepatitis C virus.</title>
        <authorList>
            <person name="Meylan E."/>
            <person name="Curran J."/>
            <person name="Hofmann K."/>
            <person name="Moradpour D."/>
            <person name="Binder M."/>
            <person name="Bartenschlager R."/>
            <person name="Tschopp J."/>
        </authorList>
    </citation>
    <scope>INTERACTION WITH MAVS/IPS1</scope>
</reference>
<reference key="10">
    <citation type="journal article" date="2007" name="Proc. Natl. Acad. Sci. U.S.A.">
        <title>Negative regulation of the RIG-I signaling by the ubiquitin ligase RNF125.</title>
        <authorList>
            <person name="Arimoto K."/>
            <person name="Takahashi H."/>
            <person name="Hishiki T."/>
            <person name="Konishi H."/>
            <person name="Fujita T."/>
            <person name="Shimotohno K."/>
        </authorList>
    </citation>
    <scope>UBIQUITINATION</scope>
</reference>
<reference key="11">
    <citation type="journal article" date="2007" name="Proc. Natl. Acad. Sci. U.S.A.">
        <title>Negative regulation of MDA5- but not RIG-I-mediated innate antiviral signaling by the dihydroxyacetone kinase.</title>
        <authorList>
            <person name="Diao F."/>
            <person name="Li S."/>
            <person name="Tian Y."/>
            <person name="Zhang M."/>
            <person name="Xu L.G."/>
            <person name="Zhang Y."/>
            <person name="Wang R.P."/>
            <person name="Chen D."/>
            <person name="Zhai Z."/>
            <person name="Zhong B."/>
            <person name="Tien P."/>
            <person name="Shu H.B."/>
        </authorList>
    </citation>
    <scope>INTERACTION WITH IKBKE; MAVS AND TKFC</scope>
</reference>
<reference key="12">
    <citation type="journal article" date="2007" name="Proc. Natl. Acad. Sci. U.S.A.">
        <title>The Atg5-Atg12 conjugate associates with innate antiviral immune responses.</title>
        <authorList>
            <person name="Jounai N."/>
            <person name="Takeshita F."/>
            <person name="Kobiyama K."/>
            <person name="Sawano A."/>
            <person name="Miyawaki A."/>
            <person name="Xin K.Q."/>
            <person name="Ishii K.J."/>
            <person name="Kawai T."/>
            <person name="Akira S."/>
            <person name="Suzuki K."/>
            <person name="Okuda K."/>
        </authorList>
    </citation>
    <scope>INTERACTION WITH ATG5 AND ATG12</scope>
</reference>
<reference key="13">
    <citation type="journal article" date="2009" name="Arthritis Rheum.">
        <title>RNA helicase encoded by melanoma differentiation-associated gene 5 is a major autoantigen in patients with clinically amyopathic dermatomyositis: Association with rapidly progressive interstitial lung disease.</title>
        <authorList>
            <person name="Sato S."/>
            <person name="Hoshino K."/>
            <person name="Satoh T."/>
            <person name="Fujita T."/>
            <person name="Kawakami Y."/>
            <person name="Fujita T."/>
            <person name="Kuwana M."/>
        </authorList>
    </citation>
    <scope>INVOLVEMENT IN CLINICALLY AMYOPATHIC DERMATOMYOSITIS</scope>
    <scope>IDENTIFICATION AS CADM-140 AUTOANTIGEN</scope>
</reference>
<reference key="14">
    <citation type="journal article" date="2009" name="J. Biol. Chem.">
        <title>Regulation of signal transduction by enzymatically inactive antiviral RNA helicase proteins MDA5, RIG-I, and LGP2.</title>
        <authorList>
            <person name="Bamming D."/>
            <person name="Horvath C.M."/>
        </authorList>
    </citation>
    <scope>FUNCTION</scope>
    <scope>CATALYTIC ACTIVITY</scope>
    <scope>MUTAGENESIS OF LYS-335; 443-ASP--HIS-446; 488-THR--SER-490; 789-THR--GLU-793 AND 818-GLN--ARG-822</scope>
</reference>
<reference key="15">
    <citation type="journal article" date="2009" name="J. Virol.">
        <title>Activation of MDA5 requires higher-order RNA structures generated during virus infection.</title>
        <authorList>
            <person name="Pichlmair A."/>
            <person name="Schulz O."/>
            <person name="Tan C.P."/>
            <person name="Rehwinkel J."/>
            <person name="Kato H."/>
            <person name="Takeuchi O."/>
            <person name="Akira S."/>
            <person name="Way M."/>
            <person name="Schiavo G."/>
            <person name="Reis e Sousa C."/>
        </authorList>
    </citation>
    <scope>FUNCTION</scope>
</reference>
<reference key="16">
    <citation type="journal article" date="2009" name="Nat. Immunol.">
        <title>PCBP2 mediates degradation of the adaptor MAVS via the HECT ubiquitin ligase AIP4.</title>
        <authorList>
            <person name="You F."/>
            <person name="Sun H."/>
            <person name="Zhou X."/>
            <person name="Sun W."/>
            <person name="Liang S."/>
            <person name="Zhai Z."/>
            <person name="Jiang Z."/>
        </authorList>
    </citation>
    <scope>INTERACTION WITH PCBP2</scope>
</reference>
<reference key="17">
    <citation type="journal article" date="2009" name="J. Virol.">
        <title>A shared interface mediates paramyxovirus interference with antiviral RNA helicases MDA5 and LGP2.</title>
        <authorList>
            <person name="Parisien J.P."/>
            <person name="Bamming D."/>
            <person name="Komuro A."/>
            <person name="Ramachandran A."/>
            <person name="Rodriguez J.J."/>
            <person name="Barber G."/>
            <person name="Wojahn R.D."/>
            <person name="Horvath C.M."/>
        </authorList>
    </citation>
    <scope>INTERACTION WITH MEASLES V PROTEIN (MICROBIAL INFECTION)</scope>
</reference>
<reference key="18">
    <citation type="journal article" date="2010" name="Cell">
        <title>NLRC5 negatively regulates the NF-kappaB and type I interferon signaling pathways.</title>
        <authorList>
            <person name="Cui J."/>
            <person name="Zhu L."/>
            <person name="Xia X."/>
            <person name="Wang H.Y."/>
            <person name="Legras X."/>
            <person name="Hong J."/>
            <person name="Ji J."/>
            <person name="Shen P."/>
            <person name="Zheng S."/>
            <person name="Chen Z.J."/>
            <person name="Wang R.F."/>
        </authorList>
    </citation>
    <scope>INTERACTION WITH NLRC5</scope>
</reference>
<reference key="19">
    <citation type="journal article" date="2010" name="Cell Res.">
        <title>The ubiquitin-specific protease 17 is involved in virus-triggered type I IFN signaling.</title>
        <authorList>
            <person name="Chen R."/>
            <person name="Zhang L."/>
            <person name="Zhong B."/>
            <person name="Tan B."/>
            <person name="Liu Y."/>
            <person name="Shu H.B."/>
        </authorList>
    </citation>
    <scope>UBIQUITINATION</scope>
    <scope>DEUBIQUITINATION BY USP17L2</scope>
</reference>
<reference key="20">
    <citation type="journal article" date="2010" name="Eur. J. Immunol.">
        <title>DEAD/H BOX 3 (DDX3) helicase binds the RIG-I adaptor IPS-1 to up-regulate IFN-beta-inducing potential.</title>
        <authorList>
            <person name="Oshiumi H."/>
            <person name="Sakai K."/>
            <person name="Matsumoto M."/>
            <person name="Seya T."/>
        </authorList>
    </citation>
    <scope>INTERACTION WITH DDX3X</scope>
</reference>
<reference key="21">
    <citation type="journal article" date="2010" name="Rheumatology">
        <title>The RIG-I-like receptor IFIH1/MDA5 is a dermatomyositis-specific autoantigen identified by the anti-CADM-140 antibody.</title>
        <authorList>
            <person name="Nakashima R."/>
            <person name="Imura Y."/>
            <person name="Kobayashi S."/>
            <person name="Yukawa N."/>
            <person name="Yoshifuji H."/>
            <person name="Nojima T."/>
            <person name="Kawabata D."/>
            <person name="Ohmura K."/>
            <person name="Usui T."/>
            <person name="Fujii T."/>
            <person name="Okawa K."/>
            <person name="Mimori T."/>
        </authorList>
    </citation>
    <scope>INVOLVEMENT IN CLINICALLY AMYOPATHIC DERMATOMYOSITIS</scope>
    <scope>IDENTIFICATION AS CADM-140 AUTOANTIGEN</scope>
    <scope>IDENTIFICATION BY MASS SPECTROMETRY</scope>
</reference>
<reference key="22">
    <citation type="journal article" date="2010" name="Sci. Signal.">
        <title>Quantitative phosphoproteomics reveals widespread full phosphorylation site occupancy during mitosis.</title>
        <authorList>
            <person name="Olsen J.V."/>
            <person name="Vermeulen M."/>
            <person name="Santamaria A."/>
            <person name="Kumar C."/>
            <person name="Miller M.L."/>
            <person name="Jensen L.J."/>
            <person name="Gnad F."/>
            <person name="Cox J."/>
            <person name="Jensen T.S."/>
            <person name="Nigg E.A."/>
            <person name="Brunak S."/>
            <person name="Mann M."/>
        </authorList>
    </citation>
    <scope>IDENTIFICATION BY MASS SPECTROMETRY [LARGE SCALE ANALYSIS]</scope>
    <source>
        <tissue>Cervix carcinoma</tissue>
    </source>
</reference>
<reference key="23">
    <citation type="journal article" date="2011" name="BMC Syst. Biol.">
        <title>Initial characterization of the human central proteome.</title>
        <authorList>
            <person name="Burkard T.R."/>
            <person name="Planyavsky M."/>
            <person name="Kaupe I."/>
            <person name="Breitwieser F.P."/>
            <person name="Buerckstuemmer T."/>
            <person name="Bennett K.L."/>
            <person name="Superti-Furga G."/>
            <person name="Colinge J."/>
        </authorList>
    </citation>
    <scope>IDENTIFICATION BY MASS SPECTROMETRY [LARGE SCALE ANALYSIS]</scope>
</reference>
<reference key="24">
    <citation type="journal article" date="2011" name="Immunity">
        <title>Immune signaling by RIG-I-like receptors.</title>
        <authorList>
            <person name="Loo Y.M."/>
            <person name="Gale M. Jr."/>
        </authorList>
    </citation>
    <scope>REVIEW ON FUNCTION</scope>
</reference>
<reference key="25">
    <citation type="journal article" date="2011" name="Immunol. Rev.">
        <title>RIG-I-like receptors: cytoplasmic sensors for non-self RNA.</title>
        <authorList>
            <person name="Kato H."/>
            <person name="Takahasi K."/>
            <person name="Fujita T."/>
        </authorList>
    </citation>
    <scope>REVIEW ON FUNCTION</scope>
</reference>
<reference key="26">
    <citation type="journal article" date="2011" name="J. Immunol.">
        <title>Innate immune responses in human monocyte-derived dendritic cells are highly dependent on the size and the 5' phosphorylation of RNA molecules.</title>
        <authorList>
            <person name="Jiang M."/>
            <person name="Osterlund P."/>
            <person name="Sarin L.P."/>
            <person name="Poranen M.M."/>
            <person name="Bamford D.H."/>
            <person name="Guo D."/>
            <person name="Julkunen I."/>
        </authorList>
    </citation>
    <scope>FUNCTION</scope>
</reference>
<reference key="27">
    <citation type="journal article" date="2011" name="J. Interferon Cytokine Res.">
        <title>Retinoic acid-inducible gene-I-like receptors.</title>
        <authorList>
            <person name="Onoguchi K."/>
            <person name="Yoneyama M."/>
            <person name="Fujita T."/>
        </authorList>
    </citation>
    <scope>REVIEW ON FUNCTION</scope>
</reference>
<reference key="28">
    <citation type="journal article" date="2011" name="Mol. Cell. Biol.">
        <title>DDX60, a DEXD/H box helicase, is a novel antiviral factor promoting RIG-I-like receptor-mediated signaling.</title>
        <authorList>
            <person name="Miyashita M."/>
            <person name="Oshiumi H."/>
            <person name="Matsumoto M."/>
            <person name="Seya T."/>
        </authorList>
    </citation>
    <scope>INTERACTION WITH DDX60</scope>
</reference>
<reference key="29">
    <citation type="journal article" date="2011" name="Mol. Immunol.">
        <title>MDA5 is SUMOylated by PIAS2? in the upregulation of type I interferon signaling.</title>
        <authorList>
            <person name="Fu J."/>
            <person name="Xiong Y."/>
            <person name="Xu Y."/>
            <person name="Cheng G."/>
            <person name="Tang H."/>
        </authorList>
    </citation>
    <scope>SUMOYLATION</scope>
    <scope>INTERACTION WITH PIAS2-BETA</scope>
</reference>
<reference key="30">
    <citation type="journal article" date="2011" name="Nat. Immunol.">
        <title>2 methylate or not 2 methylate: viral evasion of the type I interferon response.</title>
        <authorList>
            <person name="Garcia-Sastre A."/>
        </authorList>
    </citation>
    <scope>REVIEW ON FUNCTION</scope>
</reference>
<reference key="31">
    <citation type="journal article" date="2011" name="Nat. Immunol.">
        <title>Ribose 2'-O-methylation provides a molecular signature for the distinction of self and non-self mRNA dependent on the RNA sensor Mda5.</title>
        <authorList>
            <person name="Zuest R."/>
            <person name="Cervantes-Barragan L."/>
            <person name="Habjan M."/>
            <person name="Maier R."/>
            <person name="Neuman B.W."/>
            <person name="Ziebuhr J."/>
            <person name="Szretter K.J."/>
            <person name="Baker S.C."/>
            <person name="Barchet W."/>
            <person name="Diamond M.S."/>
            <person name="Siddell S.G."/>
            <person name="Ludewig B."/>
            <person name="Thiel V."/>
        </authorList>
    </citation>
    <scope>FUNCTION</scope>
</reference>
<reference key="32">
    <citation type="journal article" date="2011" name="Proc. Natl. Acad. Sci. U.S.A.">
        <title>Cooperative assembly and dynamic disassembly of MDA5 filaments for viral dsRNA recognition.</title>
        <authorList>
            <person name="Peisley A."/>
            <person name="Lin C."/>
            <person name="Wu B."/>
            <person name="Orme-Johnson M."/>
            <person name="Liu M."/>
            <person name="Walz T."/>
            <person name="Hur S."/>
        </authorList>
    </citation>
    <scope>SUBUNIT</scope>
    <scope>FUNCTION</scope>
    <scope>CATALYTIC ACTIVITY</scope>
</reference>
<reference key="33">
    <citation type="journal article" date="2012" name="J. Virol.">
        <title>Herpes simplex virus 1 tegument protein US11 downmodulates the RLR signaling pathway via direct interaction with RIG-I and MDA-5.</title>
        <authorList>
            <person name="Xing J."/>
            <person name="Wang S."/>
            <person name="Lin R."/>
            <person name="Mossman K.L."/>
            <person name="Zheng C."/>
        </authorList>
    </citation>
    <scope>INTERACTION WITH HERPES SIMPLEX VIRUS 1 PROTEIN US11 (MICROBIAL INFECTION)</scope>
</reference>
<reference key="34">
    <citation type="journal article" date="2013" name="FEBS Lett.">
        <title>A role for the Ankyrin repeat containing protein Ankrd17 in Nod1- and Nod2-mediated inflammatory responses.</title>
        <authorList>
            <person name="Menning M."/>
            <person name="Kufer T.A."/>
        </authorList>
    </citation>
    <scope>INTERACTION WITH ANKRD17</scope>
</reference>
<reference key="35">
    <citation type="journal article" date="2013" name="Immunity">
        <title>Dephosphorylation of the RNA sensors RIG-I and MDA5 by the phosphatase PP1 is essential for innate immune signaling.</title>
        <authorList>
            <person name="Wies E."/>
            <person name="Wang M.K."/>
            <person name="Maharaj N.P."/>
            <person name="Chen K."/>
            <person name="Zhou S."/>
            <person name="Finberg R.W."/>
            <person name="Gack M.U."/>
        </authorList>
    </citation>
    <scope>PHOSPHORYLATION AT SER-88</scope>
    <scope>MUTAGENESIS OF SER-88</scope>
    <scope>DEPHOSPHORYLATION</scope>
</reference>
<reference key="36">
    <citation type="journal article" date="2014" name="J. Proteomics">
        <title>An enzyme assisted RP-RPLC approach for in-depth analysis of human liver phosphoproteome.</title>
        <authorList>
            <person name="Bian Y."/>
            <person name="Song C."/>
            <person name="Cheng K."/>
            <person name="Dong M."/>
            <person name="Wang F."/>
            <person name="Huang J."/>
            <person name="Sun D."/>
            <person name="Wang L."/>
            <person name="Ye M."/>
            <person name="Zou H."/>
        </authorList>
    </citation>
    <scope>IDENTIFICATION BY MASS SPECTROMETRY [LARGE SCALE ANALYSIS]</scope>
    <source>
        <tissue>Liver</tissue>
    </source>
</reference>
<reference key="37">
    <citation type="journal article" date="2014" name="J. Virol.">
        <title>Enterovirus 2Apro targets MDA5 and MAVS in infected cells.</title>
        <authorList>
            <person name="Feng Q."/>
            <person name="Langereis M.A."/>
            <person name="Lork M."/>
            <person name="Nguyen M."/>
            <person name="Hato S.V."/>
            <person name="Lanke K."/>
            <person name="Emdad L."/>
            <person name="Bhoopathi P."/>
            <person name="Fisher P.B."/>
            <person name="Lloyd R.E."/>
            <person name="van Kuppeveld F.J."/>
        </authorList>
    </citation>
    <scope>PROTEOLYTIC CLEAVAGE (MICROBIAL INFECTION)</scope>
</reference>
<reference key="38">
    <citation type="journal article" date="2015" name="Cell Rep.">
        <title>RIOK3-mediated phosphorylation of MDA5 interferes with its assembly and attenuates the innate immune response.</title>
        <authorList>
            <person name="Takashima K."/>
            <person name="Oshiumi H."/>
            <person name="Takaki H."/>
            <person name="Matsumoto M."/>
            <person name="Seya T."/>
        </authorList>
    </citation>
    <scope>PHOSPHORYLATION AT SER-828</scope>
    <scope>MUTAGENESIS OF SER-828 AND THR-829</scope>
</reference>
<reference key="39">
    <citation type="journal article" date="2015" name="J. Innate Immun.">
        <title>ECSIT bridges RIG-I-like receptors to VISA in signaling events of innate antiviral responses.</title>
        <authorList>
            <person name="Lei C.Q."/>
            <person name="Zhang Y."/>
            <person name="Li M."/>
            <person name="Jiang L.Q."/>
            <person name="Zhong B."/>
            <person name="Kim Y.H."/>
            <person name="Shu H.B."/>
        </authorList>
    </citation>
    <scope>INTERACTION WITH ECSIT</scope>
</reference>
<reference key="40">
    <citation type="journal article" date="2016" name="EMBO Rep.">
        <title>RNF123 has an E3 ligase-independent function in RIG-I-like receptor-mediated antiviral signaling.</title>
        <authorList>
            <person name="Wang S."/>
            <person name="Yang Y.K."/>
            <person name="Chen T."/>
            <person name="Zhang H."/>
            <person name="Yang W.W."/>
            <person name="Song S.S."/>
            <person name="Zhai Z.H."/>
            <person name="Chen D.Y."/>
        </authorList>
    </citation>
    <scope>INTERACTION WITH RNF123</scope>
</reference>
<reference key="41">
    <citation type="journal article" date="2017" name="J. Virol.">
        <title>Disruption of MDA5-Mediated Innate Immune Responses by the 3C Proteins of Coxsackievirus A16, Coxsackievirus A6, and Enterovirus D68.</title>
        <authorList>
            <person name="Rui Y."/>
            <person name="Su J."/>
            <person name="Wang H."/>
            <person name="Chang J."/>
            <person name="Wang S."/>
            <person name="Zheng W."/>
            <person name="Cai Y."/>
            <person name="Wei W."/>
            <person name="Gordy J.T."/>
            <person name="Markham R."/>
            <person name="Kong W."/>
            <person name="Zhang W."/>
            <person name="Yu X.F."/>
        </authorList>
    </citation>
    <scope>INTERACTION WITH COXSACKIEVIRUS A16 PROTEASE 3C (MICROBIAL INFECTION)</scope>
    <scope>INTERACTION WITH HUMAN ENTEROVIRUS D68 PROTEASE 3C (MICROBIAL INFECTION)</scope>
</reference>
<reference key="42">
    <citation type="journal article" date="2017" name="Cell Rep.">
        <title>The E3 Ubiquitin Ligase TRIM40 Attenuates Antiviral Immune Responses by Targeting MDA5 and RIG-I.</title>
        <authorList>
            <person name="Zhao C."/>
            <person name="Jia M."/>
            <person name="Song H."/>
            <person name="Yu Z."/>
            <person name="Wang W."/>
            <person name="Li Q."/>
            <person name="Zhang L."/>
            <person name="Zhao W."/>
            <person name="Cao X."/>
        </authorList>
    </citation>
    <scope>FUNCTION</scope>
    <scope>UBIQUITINATION BY TRIM40</scope>
</reference>
<reference key="43">
    <citation type="journal article" date="2017" name="Cell Death Dis.">
        <title>ARRDC4 regulates enterovirus 71-induced innate immune response by promoting K63 polyubiquitination of MDA5 through TRIM65.</title>
        <authorList>
            <person name="Meng J."/>
            <person name="Yao Z."/>
            <person name="He Y."/>
            <person name="Zhang R."/>
            <person name="Zhang Y."/>
            <person name="Yao X."/>
            <person name="Yang H."/>
            <person name="Chen L."/>
            <person name="Zhang Z."/>
            <person name="Zhang H."/>
            <person name="Bao X."/>
            <person name="Hu G."/>
            <person name="Wu T."/>
            <person name="Cheng J."/>
        </authorList>
    </citation>
    <scope>FUNCTION</scope>
    <scope>UBIQUITINATION BY TRIM65</scope>
</reference>
<reference key="44">
    <citation type="journal article" date="2018" name="Antiviral Res.">
        <title>Encephalomyocarditis virus 2C protein antagonizes interferon-beta signaling pathway through interaction with MDA5.</title>
        <authorList>
            <person name="Li L."/>
            <person name="Fan H."/>
            <person name="Song Z."/>
            <person name="Liu X."/>
            <person name="Bai J."/>
            <person name="Jiang P."/>
        </authorList>
    </citation>
    <scope>INTERACTION WITH ENCEPHALOMYOCARDITIS VIRUS PROTEIN 2C (MICROBIAL INFECTION)</scope>
</reference>
<reference key="45">
    <citation type="journal article" date="2018" name="Immunity">
        <title>The zinc-finger protein ZCCHC3 binds RNA and facilitates viral RNA sensing and activation of the RIG-I-like receptors.</title>
        <authorList>
            <person name="Lian H."/>
            <person name="Zang R."/>
            <person name="Wei J."/>
            <person name="Ye W."/>
            <person name="Hu M.M."/>
            <person name="Chen Y.D."/>
            <person name="Zhang X.N."/>
            <person name="Guo Y."/>
            <person name="Lei C.Q."/>
            <person name="Yang Q."/>
            <person name="Luo W.W."/>
            <person name="Li S."/>
            <person name="Shu H.B."/>
        </authorList>
    </citation>
    <scope>INTERACTION WITH ZCCHC3</scope>
    <scope>UBIQUITINATION</scope>
</reference>
<reference key="46">
    <citation type="journal article" date="2020" name="J. Immunol.">
        <title>NOD1 Promotes Antiviral Signaling by Binding Viral RNA and Regulating the Interaction of MDA5 and MAVS.</title>
        <authorList>
            <person name="Wu X.M."/>
            <person name="Zhang J."/>
            <person name="Li P.W."/>
            <person name="Hu Y.W."/>
            <person name="Cao L."/>
            <person name="Ouyang S."/>
            <person name="Bi Y.H."/>
            <person name="Nie P."/>
            <person name="Chang M.X."/>
        </authorList>
    </citation>
    <scope>FUNCTION</scope>
    <scope>INTERACTION WITH IFIH1</scope>
    <scope>SUBCELLULAR LOCATION</scope>
</reference>
<reference key="47">
    <citation type="journal article" date="2021" name="Cell Rep.">
        <title>MDA5 Governs the Innate Immune Response to SARS-CoV-2 in Lung Epithelial Cells.</title>
        <authorList>
            <person name="Yin X."/>
            <person name="Riva L."/>
            <person name="Pu Y."/>
            <person name="Martin-Sancho L."/>
            <person name="Kanamune J."/>
            <person name="Yamamoto Y."/>
            <person name="Sakai K."/>
            <person name="Gotoh S."/>
            <person name="Miorin L."/>
            <person name="De Jesus P.D."/>
            <person name="Yang C.C."/>
            <person name="Herbert K.M."/>
            <person name="Yoh S."/>
            <person name="Hultquist J.F."/>
            <person name="Garcia-Sastre A."/>
            <person name="Chanda S.K."/>
        </authorList>
    </citation>
    <scope>FUNCTION</scope>
</reference>
<reference key="48">
    <citation type="journal article" date="2021" name="J. Virol.">
        <title>SARS-CoV-2 triggers an MDA-5-dependent interferon response which is unable to control replication in lung epithelial cells.</title>
        <authorList>
            <person name="Rebendenne A."/>
            <person name="Valadao A.L.C."/>
            <person name="Tauziet M."/>
            <person name="Maarifi G."/>
            <person name="Bonaventure B."/>
            <person name="McKellar J."/>
            <person name="Planes R."/>
            <person name="Nisole S."/>
            <person name="Arnaud-Arnould M."/>
            <person name="Moncorge O."/>
            <person name="Goujon C."/>
        </authorList>
    </citation>
    <scope>FUNCTION</scope>
</reference>
<reference key="49">
    <citation type="journal article" date="2021" name="Nat. Microbiol.">
        <title>ISG15-dependent activation of the sensor MDA5 is antagonized by the SARS-CoV-2 papain-like protease to evade host innate immunity.</title>
        <authorList>
            <person name="Liu G."/>
            <person name="Lee J.H."/>
            <person name="Parker Z.M."/>
            <person name="Acharya D."/>
            <person name="Chiang J.J."/>
            <person name="van Gent M."/>
            <person name="Riedl W."/>
            <person name="Davis-Gardner M.E."/>
            <person name="Wies E."/>
            <person name="Chiang C."/>
            <person name="Gack M.U."/>
        </authorList>
    </citation>
    <scope>ISGYLATION AT LYS-23 AND LYS-43</scope>
    <scope>INTERACTION WITH SARS-COV-2 VIRUS PROTEIN NSP3 (MICROBIAL INFECTION)</scope>
    <scope>FUNCTION</scope>
    <scope>MUTAGENESIS OF LYS-23; LYS-43; LYS-68; 74-GLY-TRP-75; SER-88; 841-ILE-GLU-842 AND 848-ASP-PHE-849</scope>
    <scope>SUBUNIT</scope>
    <scope>PHOSPHORYLATION AT SER-88</scope>
    <scope>SUBCELLULAR LOCATION</scope>
</reference>
<reference key="50">
    <citation type="journal article" date="2009" name="Arch. Biochem. Biophys.">
        <title>Structural basis of double-stranded RNA recognition by the RIG-I like receptor MDA5.</title>
        <authorList>
            <person name="Li X."/>
            <person name="Lu C."/>
            <person name="Stewart M."/>
            <person name="Xu H."/>
            <person name="Strong R.K."/>
            <person name="Igumenova T."/>
            <person name="Li P."/>
        </authorList>
    </citation>
    <scope>X-RAY CRYSTALLOGRAPHY (1.45 ANGSTROMS) OF 893-1017 IN COMPLEX WITH ZINC IONS</scope>
</reference>
<reference key="51">
    <citation type="journal article" date="2009" name="J. Biol. Chem.">
        <title>Solution structures of cytosolic RNA sensor MDA5 and LGP2 C-terminal domains: identification of the RNA recognition loop in RIG-I-like receptors.</title>
        <authorList>
            <person name="Takahasi K."/>
            <person name="Kumeta H."/>
            <person name="Tsuduki N."/>
            <person name="Narita R."/>
            <person name="Shigemoto T."/>
            <person name="Hirai R."/>
            <person name="Yoneyama M."/>
            <person name="Horiuchi M."/>
            <person name="Ogura K."/>
            <person name="Fujita T."/>
            <person name="Inagaki F."/>
        </authorList>
    </citation>
    <scope>STRUCTURE BY NMR OF 896-1025 IN COMPLEX WITH ZINC IONS</scope>
</reference>
<reference key="52">
    <citation type="submission" date="2009-02" db="PDB data bank">
        <title>Human dech-box RNA helicase mda5 (melanoma differentiation-associated protein 5), dech-domain.</title>
        <authorList>
            <consortium name="Structural genomics consortium (SGC)"/>
        </authorList>
    </citation>
    <scope>X-RAY CRYSTALLOGRAPHY (1.6 ANGSTROMS) OF 277-490</scope>
</reference>
<reference key="53">
    <citation type="journal article" date="2006" name="Nat. Genet.">
        <title>A genome-wide association study of nonsynonymous SNPs identifies a type 1 diabetes locus in the interferon-induced helicase (IFIH1) region.</title>
        <authorList>
            <person name="Smyth D.J."/>
            <person name="Cooper J.D."/>
            <person name="Bailey R."/>
            <person name="Field S."/>
            <person name="Burren O."/>
            <person name="Smink L.J."/>
            <person name="Guja C."/>
            <person name="Ionescu-Tirgoviste C."/>
            <person name="Widmer B."/>
            <person name="Dunger D.B."/>
            <person name="Savage D.A."/>
            <person name="Walker N.M."/>
            <person name="Clayton D.G."/>
            <person name="Todd J.A."/>
        </authorList>
    </citation>
    <scope>VARIANT THR-946</scope>
    <scope>POSSIBLE ASSOCIATION WITH T1D19</scope>
</reference>
<reference key="54">
    <citation type="journal article" date="2014" name="Am. J. Hum. Genet.">
        <title>Aicardi-Goutieres syndrome is caused by IFIH1 mutations.</title>
        <authorList>
            <person name="Oda H."/>
            <person name="Nakagawa K."/>
            <person name="Abe J."/>
            <person name="Awaya T."/>
            <person name="Funabiki M."/>
            <person name="Hijikata A."/>
            <person name="Nishikomori R."/>
            <person name="Funatsuka M."/>
            <person name="Ohshima Y."/>
            <person name="Sugawara Y."/>
            <person name="Yasumi T."/>
            <person name="Kato H."/>
            <person name="Shirai T."/>
            <person name="Ohara O."/>
            <person name="Fujita T."/>
            <person name="Heike T."/>
        </authorList>
    </citation>
    <scope>INVOLVEMENT IN AGS7</scope>
    <scope>VARIANTS AGS7 PHE-372; THR-452 AND HIS-779</scope>
    <scope>CHARACTERIZATION OF VARIANTS AGS7 PHE-372; THR-452 AND HIS-779</scope>
</reference>
<reference key="55">
    <citation type="journal article" date="2014" name="Nat. Genet.">
        <title>Gain-of-function mutations in IFIH1 cause a spectrum of human disease phenotypes associated with upregulated type I interferon signaling.</title>
        <authorList>
            <person name="Rice G.I."/>
            <person name="del Toro Duany Y."/>
            <person name="Jenkinson E.M."/>
            <person name="Forte G.M."/>
            <person name="Anderson B.H."/>
            <person name="Ariaudo G."/>
            <person name="Bader-Meunier B."/>
            <person name="Baildam E.M."/>
            <person name="Battini R."/>
            <person name="Beresford M.W."/>
            <person name="Casarano M."/>
            <person name="Chouchane M."/>
            <person name="Cimaz R."/>
            <person name="Collins A.E."/>
            <person name="Cordeiro N.J."/>
            <person name="Dale R.C."/>
            <person name="Davidson J.E."/>
            <person name="De Waele L."/>
            <person name="Desguerre I."/>
            <person name="Faivre L."/>
            <person name="Fazzi E."/>
            <person name="Isidor B."/>
            <person name="Lagae L."/>
            <person name="Latchman A.R."/>
            <person name="Lebon P."/>
            <person name="Li C."/>
            <person name="Livingston J.H."/>
            <person name="Lourenco C.M."/>
            <person name="Mancardi M.M."/>
            <person name="Masurel-Paulet A."/>
            <person name="McInnes I.B."/>
            <person name="Menezes M.P."/>
            <person name="Mignot C."/>
            <person name="O'Sullivan J."/>
            <person name="Orcesi S."/>
            <person name="Picco P.P."/>
            <person name="Riva E."/>
            <person name="Robinson R.A."/>
            <person name="Rodriguez D."/>
            <person name="Salvatici E."/>
            <person name="Scott C."/>
            <person name="Szybowska M."/>
            <person name="Tolmie J.L."/>
            <person name="Vanderver A."/>
            <person name="Vanhulle C."/>
            <person name="Vieira J.P."/>
            <person name="Webb K."/>
            <person name="Whitney R.N."/>
            <person name="Williams S.G."/>
            <person name="Wolfe L.A."/>
            <person name="Zuberi S.M."/>
            <person name="Hur S."/>
            <person name="Crow Y.J."/>
        </authorList>
    </citation>
    <scope>INVOLVEMENT IN AGS7</scope>
    <scope>VARIANTS AGS7 GLY-337; VAL-393; ARG-495; GLN-720; HIS-779 AND CYS-779</scope>
    <scope>CHARACTERIZATION OF VARIANTS AGS7 GLY-337; VAL-393; ARG-495; GLN-720; HIS-779 AND CYS-779</scope>
</reference>
<reference key="56">
    <citation type="journal article" date="2015" name="Am. J. Hum. Genet.">
        <title>A specific IFIH1 gain-of-function mutation causes Singleton-Merten syndrome.</title>
        <authorList>
            <person name="Rutsch F."/>
            <person name="MacDougall M."/>
            <person name="Lu C."/>
            <person name="Buers I."/>
            <person name="Mamaeva O."/>
            <person name="Nitschke Y."/>
            <person name="Rice G.I."/>
            <person name="Erlandsen H."/>
            <person name="Kehl H.G."/>
            <person name="Thiele H."/>
            <person name="Nurnberg P."/>
            <person name="Hohne W."/>
            <person name="Crow Y.J."/>
            <person name="Feigenbaum A."/>
            <person name="Hennekam R.C."/>
        </authorList>
    </citation>
    <scope>INVOLVEMENT IN SGMRT1</scope>
    <scope>VARIANT SGMRT1 GLN-822</scope>
    <scope>CHARACTERIZATION OF VARIANT SGMRT1 GLN-822</scope>
</reference>
<reference key="57">
    <citation type="journal article" date="2017" name="J. Exp. Med.">
        <title>Recurrent rhinovirus infections in a child with inherited MDA5 deficiency.</title>
        <authorList>
            <person name="Lamborn I.T."/>
            <person name="Jing H."/>
            <person name="Zhang Y."/>
            <person name="Drutman S.B."/>
            <person name="Abbott J.K."/>
            <person name="Munir S."/>
            <person name="Bade S."/>
            <person name="Murdock H.M."/>
            <person name="Santos C.P."/>
            <person name="Brock L.G."/>
            <person name="Masutani E."/>
            <person name="Fordjour E.Y."/>
            <person name="McElwee J.J."/>
            <person name="Hughes J.D."/>
            <person name="Nichols D.P."/>
            <person name="Belkadi A."/>
            <person name="Oler A.J."/>
            <person name="Happel C.S."/>
            <person name="Matthews H.F."/>
            <person name="Abel L."/>
            <person name="Collins P.L."/>
            <person name="Subbarao K."/>
            <person name="Gelfand E.W."/>
            <person name="Ciancanelli M.J."/>
            <person name="Casanova J.L."/>
            <person name="Su H.C."/>
        </authorList>
    </citation>
    <scope>VARIANT IMD95 GLU-365</scope>
    <scope>CHARACTERIZATION OF VARIANT IMD95 GLU-365</scope>
    <scope>FUNCTION</scope>
    <scope>INVOLVEMENT IN IMD95</scope>
</reference>
<reference key="58">
    <citation type="journal article" date="2017" name="Front. Genet.">
        <title>Recurrent and prolonged infections in a child with a homozygous IFIH1 nonsense mutation.</title>
        <authorList>
            <person name="Zaki M."/>
            <person name="Thoenes M."/>
            <person name="Kawalia A."/>
            <person name="Nuernberg P."/>
            <person name="Kaiser R."/>
            <person name="Heller R."/>
            <person name="Bolz H.J."/>
        </authorList>
    </citation>
    <scope>VARIANT IMD95 889-LYS--ASP-1025 DEL</scope>
    <scope>CHARACTERIZATION OF VARIANT IMD95 889-LYS--ASP-1025 DEL</scope>
</reference>
<dbReference type="EC" id="3.6.4.13" evidence="19 34"/>
<dbReference type="EMBL" id="AF095844">
    <property type="protein sequence ID" value="AAG34368.1"/>
    <property type="molecule type" value="mRNA"/>
</dbReference>
<dbReference type="EMBL" id="AY017378">
    <property type="protein sequence ID" value="AAG54076.1"/>
    <property type="molecule type" value="mRNA"/>
</dbReference>
<dbReference type="EMBL" id="BC046208">
    <property type="protein sequence ID" value="AAH46208.1"/>
    <property type="molecule type" value="mRNA"/>
</dbReference>
<dbReference type="EMBL" id="BC078180">
    <property type="protein sequence ID" value="AAH78180.1"/>
    <property type="status" value="ALT_SEQ"/>
    <property type="molecule type" value="mRNA"/>
</dbReference>
<dbReference type="EMBL" id="BC111750">
    <property type="protein sequence ID" value="AAI11751.1"/>
    <property type="molecule type" value="mRNA"/>
</dbReference>
<dbReference type="EMBL" id="AK056293">
    <property type="protein sequence ID" value="BAB71141.1"/>
    <property type="status" value="ALT_INIT"/>
    <property type="molecule type" value="mRNA"/>
</dbReference>
<dbReference type="CCDS" id="CCDS2217.1">
    <molecule id="Q9BYX4-1"/>
</dbReference>
<dbReference type="RefSeq" id="NP_071451.2">
    <molecule id="Q9BYX4-1"/>
    <property type="nucleotide sequence ID" value="NM_022168.3"/>
</dbReference>
<dbReference type="PDB" id="2RQB">
    <property type="method" value="NMR"/>
    <property type="chains" value="A=896-1025"/>
</dbReference>
<dbReference type="PDB" id="3B6E">
    <property type="method" value="X-ray"/>
    <property type="resolution" value="1.60 A"/>
    <property type="chains" value="A=277-490"/>
</dbReference>
<dbReference type="PDB" id="3GA3">
    <property type="method" value="X-ray"/>
    <property type="resolution" value="1.45 A"/>
    <property type="chains" value="A=893-1017"/>
</dbReference>
<dbReference type="PDB" id="4GL2">
    <property type="method" value="X-ray"/>
    <property type="resolution" value="3.56 A"/>
    <property type="chains" value="A/B=306-1017"/>
</dbReference>
<dbReference type="PDB" id="7DNI">
    <property type="method" value="EM"/>
    <property type="resolution" value="3.20 A"/>
    <property type="chains" value="A/B/C/D=1-208"/>
</dbReference>
<dbReference type="PDB" id="7DNJ">
    <property type="method" value="EM"/>
    <property type="resolution" value="3.30 A"/>
    <property type="chains" value="A/B/C/D=1-208"/>
</dbReference>
<dbReference type="PDB" id="7JL0">
    <property type="method" value="EM"/>
    <property type="resolution" value="4.30 A"/>
    <property type="chains" value="A=287-1025"/>
</dbReference>
<dbReference type="PDB" id="7JL2">
    <property type="method" value="EM"/>
    <property type="resolution" value="4.30 A"/>
    <property type="chains" value="A/C/E=287-1025"/>
</dbReference>
<dbReference type="PDBsum" id="2RQB"/>
<dbReference type="PDBsum" id="3B6E"/>
<dbReference type="PDBsum" id="3GA3"/>
<dbReference type="PDBsum" id="4GL2"/>
<dbReference type="PDBsum" id="7DNI"/>
<dbReference type="PDBsum" id="7DNJ"/>
<dbReference type="PDBsum" id="7JL0"/>
<dbReference type="PDBsum" id="7JL2"/>
<dbReference type="EMDB" id="EMD-22368"/>
<dbReference type="EMDB" id="EMD-22370"/>
<dbReference type="EMDB" id="EMD-30784"/>
<dbReference type="EMDB" id="EMD-30785"/>
<dbReference type="SMR" id="Q9BYX4"/>
<dbReference type="BioGRID" id="122082">
    <property type="interactions" value="51"/>
</dbReference>
<dbReference type="DIP" id="DIP-42607N"/>
<dbReference type="FunCoup" id="Q9BYX4">
    <property type="interactions" value="914"/>
</dbReference>
<dbReference type="IntAct" id="Q9BYX4">
    <property type="interactions" value="59"/>
</dbReference>
<dbReference type="STRING" id="9606.ENSP00000497271"/>
<dbReference type="ChEMBL" id="CHEMBL4739862"/>
<dbReference type="iPTMnet" id="Q9BYX4"/>
<dbReference type="PhosphoSitePlus" id="Q9BYX4"/>
<dbReference type="BioMuta" id="IFIH1"/>
<dbReference type="DMDM" id="134047802"/>
<dbReference type="jPOST" id="Q9BYX4"/>
<dbReference type="MassIVE" id="Q9BYX4"/>
<dbReference type="PaxDb" id="9606-ENSP00000263642"/>
<dbReference type="PeptideAtlas" id="Q9BYX4"/>
<dbReference type="ProteomicsDB" id="79740">
    <molecule id="Q9BYX4-1"/>
</dbReference>
<dbReference type="ProteomicsDB" id="79741">
    <molecule id="Q9BYX4-2"/>
</dbReference>
<dbReference type="Pumba" id="Q9BYX4"/>
<dbReference type="Antibodypedia" id="805">
    <property type="antibodies" value="507 antibodies from 41 providers"/>
</dbReference>
<dbReference type="DNASU" id="64135"/>
<dbReference type="Ensembl" id="ENST00000421365.2">
    <molecule id="Q9BYX4-2"/>
    <property type="protein sequence ID" value="ENSP00000408450.2"/>
    <property type="gene ID" value="ENSG00000115267.10"/>
</dbReference>
<dbReference type="Ensembl" id="ENST00000649979.2">
    <molecule id="Q9BYX4-1"/>
    <property type="protein sequence ID" value="ENSP00000497271.1"/>
    <property type="gene ID" value="ENSG00000115267.10"/>
</dbReference>
<dbReference type="GeneID" id="64135"/>
<dbReference type="KEGG" id="hsa:64135"/>
<dbReference type="MANE-Select" id="ENST00000649979.2">
    <property type="protein sequence ID" value="ENSP00000497271.1"/>
    <property type="RefSeq nucleotide sequence ID" value="NM_022168.4"/>
    <property type="RefSeq protein sequence ID" value="NP_071451.2"/>
</dbReference>
<dbReference type="UCSC" id="uc002uce.5">
    <molecule id="Q9BYX4-1"/>
    <property type="organism name" value="human"/>
</dbReference>
<dbReference type="AGR" id="HGNC:18873"/>
<dbReference type="CTD" id="64135"/>
<dbReference type="DisGeNET" id="64135"/>
<dbReference type="GeneCards" id="IFIH1"/>
<dbReference type="GeneReviews" id="IFIH1"/>
<dbReference type="HGNC" id="HGNC:18873">
    <property type="gene designation" value="IFIH1"/>
</dbReference>
<dbReference type="HPA" id="ENSG00000115267">
    <property type="expression patterns" value="Tissue enhanced (bone)"/>
</dbReference>
<dbReference type="MalaCards" id="IFIH1"/>
<dbReference type="MIM" id="182250">
    <property type="type" value="phenotype"/>
</dbReference>
<dbReference type="MIM" id="606951">
    <property type="type" value="gene"/>
</dbReference>
<dbReference type="MIM" id="610155">
    <property type="type" value="phenotype"/>
</dbReference>
<dbReference type="MIM" id="615846">
    <property type="type" value="phenotype"/>
</dbReference>
<dbReference type="MIM" id="619773">
    <property type="type" value="phenotype"/>
</dbReference>
<dbReference type="neXtProt" id="NX_Q9BYX4"/>
<dbReference type="OpenTargets" id="ENSG00000115267"/>
<dbReference type="Orphanet" id="51">
    <property type="disease" value="Aicardi-Goutieres syndrome"/>
</dbReference>
<dbReference type="Orphanet" id="689231">
    <property type="disease" value="IFH1-related hereditary spastic paraplegia"/>
</dbReference>
<dbReference type="Orphanet" id="85191">
    <property type="disease" value="Singleton-Merten dysplasia"/>
</dbReference>
<dbReference type="PharmGKB" id="PA134889215"/>
<dbReference type="VEuPathDB" id="HostDB:ENSG00000115267"/>
<dbReference type="eggNOG" id="KOG0354">
    <property type="taxonomic scope" value="Eukaryota"/>
</dbReference>
<dbReference type="GeneTree" id="ENSGT00940000153173"/>
<dbReference type="HOGENOM" id="CLU_006888_0_0_1"/>
<dbReference type="InParanoid" id="Q9BYX4"/>
<dbReference type="OMA" id="TFCQMNP"/>
<dbReference type="OrthoDB" id="416741at2759"/>
<dbReference type="PAN-GO" id="Q9BYX4">
    <property type="GO annotations" value="7 GO annotations based on evolutionary models"/>
</dbReference>
<dbReference type="PhylomeDB" id="Q9BYX4"/>
<dbReference type="TreeFam" id="TF330258"/>
<dbReference type="PathwayCommons" id="Q9BYX4"/>
<dbReference type="Reactome" id="R-HSA-168928">
    <property type="pathway name" value="DDX58/IFIH1-mediated induction of interferon-alpha/beta"/>
</dbReference>
<dbReference type="Reactome" id="R-HSA-5689880">
    <property type="pathway name" value="Ub-specific processing proteases"/>
</dbReference>
<dbReference type="Reactome" id="R-HSA-5689896">
    <property type="pathway name" value="Ovarian tumor domain proteases"/>
</dbReference>
<dbReference type="Reactome" id="R-HSA-918233">
    <property type="pathway name" value="TRAF3-dependent IRF activation pathway"/>
</dbReference>
<dbReference type="Reactome" id="R-HSA-933541">
    <property type="pathway name" value="TRAF6 mediated IRF7 activation"/>
</dbReference>
<dbReference type="Reactome" id="R-HSA-933542">
    <property type="pathway name" value="TRAF6 mediated NF-kB activation"/>
</dbReference>
<dbReference type="Reactome" id="R-HSA-933543">
    <property type="pathway name" value="NF-kB activation through FADD/RIP-1 pathway mediated by caspase-8 and -10"/>
</dbReference>
<dbReference type="Reactome" id="R-HSA-936440">
    <property type="pathway name" value="Negative regulators of DDX58/IFIH1 signaling"/>
</dbReference>
<dbReference type="Reactome" id="R-HSA-9692916">
    <property type="pathway name" value="SARS-CoV-1 activates/modulates innate immune responses"/>
</dbReference>
<dbReference type="Reactome" id="R-HSA-9705671">
    <property type="pathway name" value="SARS-CoV-2 activates/modulates innate and adaptive immune responses"/>
</dbReference>
<dbReference type="Reactome" id="R-HSA-9833109">
    <property type="pathway name" value="Evasion by RSV of host interferon responses"/>
</dbReference>
<dbReference type="Reactome" id="R-HSA-9909505">
    <property type="pathway name" value="Modulation of host responses by IFN-stimulated genes"/>
</dbReference>
<dbReference type="SignaLink" id="Q9BYX4"/>
<dbReference type="SIGNOR" id="Q9BYX4"/>
<dbReference type="BioGRID-ORCS" id="64135">
    <property type="hits" value="9 hits in 1158 CRISPR screens"/>
</dbReference>
<dbReference type="ChiTaRS" id="IFIH1">
    <property type="organism name" value="human"/>
</dbReference>
<dbReference type="EvolutionaryTrace" id="Q9BYX4"/>
<dbReference type="GeneWiki" id="MDA5"/>
<dbReference type="GenomeRNAi" id="64135"/>
<dbReference type="Pharos" id="Q9BYX4">
    <property type="development level" value="Tbio"/>
</dbReference>
<dbReference type="PRO" id="PR:Q9BYX4"/>
<dbReference type="Proteomes" id="UP000005640">
    <property type="component" value="Chromosome 2"/>
</dbReference>
<dbReference type="RNAct" id="Q9BYX4">
    <property type="molecule type" value="protein"/>
</dbReference>
<dbReference type="Bgee" id="ENSG00000115267">
    <property type="expression patterns" value="Expressed in palpebral conjunctiva and 195 other cell types or tissues"/>
</dbReference>
<dbReference type="ExpressionAtlas" id="Q9BYX4">
    <property type="expression patterns" value="baseline and differential"/>
</dbReference>
<dbReference type="GO" id="GO:0005737">
    <property type="term" value="C:cytoplasm"/>
    <property type="evidence" value="ECO:0000314"/>
    <property type="project" value="UniProtKB"/>
</dbReference>
<dbReference type="GO" id="GO:0005829">
    <property type="term" value="C:cytosol"/>
    <property type="evidence" value="ECO:0000304"/>
    <property type="project" value="Reactome"/>
</dbReference>
<dbReference type="GO" id="GO:0005739">
    <property type="term" value="C:mitochondrion"/>
    <property type="evidence" value="ECO:0000314"/>
    <property type="project" value="UniProtKB"/>
</dbReference>
<dbReference type="GO" id="GO:0005634">
    <property type="term" value="C:nucleus"/>
    <property type="evidence" value="ECO:0007669"/>
    <property type="project" value="UniProtKB-SubCell"/>
</dbReference>
<dbReference type="GO" id="GO:0005524">
    <property type="term" value="F:ATP binding"/>
    <property type="evidence" value="ECO:0007669"/>
    <property type="project" value="UniProtKB-KW"/>
</dbReference>
<dbReference type="GO" id="GO:0016887">
    <property type="term" value="F:ATP hydrolysis activity"/>
    <property type="evidence" value="ECO:0000315"/>
    <property type="project" value="UniProtKB"/>
</dbReference>
<dbReference type="GO" id="GO:0003677">
    <property type="term" value="F:DNA binding"/>
    <property type="evidence" value="ECO:0007669"/>
    <property type="project" value="InterPro"/>
</dbReference>
<dbReference type="GO" id="GO:0003725">
    <property type="term" value="F:double-stranded RNA binding"/>
    <property type="evidence" value="ECO:0000314"/>
    <property type="project" value="UniProtKB"/>
</dbReference>
<dbReference type="GO" id="GO:0042802">
    <property type="term" value="F:identical protein binding"/>
    <property type="evidence" value="ECO:0000314"/>
    <property type="project" value="UniProtKB"/>
</dbReference>
<dbReference type="GO" id="GO:0038187">
    <property type="term" value="F:pattern recognition receptor activity"/>
    <property type="evidence" value="ECO:0000314"/>
    <property type="project" value="UniProt"/>
</dbReference>
<dbReference type="GO" id="GO:0043021">
    <property type="term" value="F:ribonucleoprotein complex binding"/>
    <property type="evidence" value="ECO:0000353"/>
    <property type="project" value="UniProtKB"/>
</dbReference>
<dbReference type="GO" id="GO:0003723">
    <property type="term" value="F:RNA binding"/>
    <property type="evidence" value="ECO:0000314"/>
    <property type="project" value="UniProtKB"/>
</dbReference>
<dbReference type="GO" id="GO:0003724">
    <property type="term" value="F:RNA helicase activity"/>
    <property type="evidence" value="ECO:0000315"/>
    <property type="project" value="UniProtKB"/>
</dbReference>
<dbReference type="GO" id="GO:0003727">
    <property type="term" value="F:single-stranded RNA binding"/>
    <property type="evidence" value="ECO:0000314"/>
    <property type="project" value="UniProtKB"/>
</dbReference>
<dbReference type="GO" id="GO:0008270">
    <property type="term" value="F:zinc ion binding"/>
    <property type="evidence" value="ECO:0000314"/>
    <property type="project" value="UniProtKB"/>
</dbReference>
<dbReference type="GO" id="GO:0140374">
    <property type="term" value="P:antiviral innate immune response"/>
    <property type="evidence" value="ECO:0000318"/>
    <property type="project" value="GO_Central"/>
</dbReference>
<dbReference type="GO" id="GO:0071360">
    <property type="term" value="P:cellular response to exogenous dsRNA"/>
    <property type="evidence" value="ECO:0000315"/>
    <property type="project" value="UniProtKB"/>
</dbReference>
<dbReference type="GO" id="GO:0098586">
    <property type="term" value="P:cellular response to virus"/>
    <property type="evidence" value="ECO:0000270"/>
    <property type="project" value="ARUK-UCL"/>
</dbReference>
<dbReference type="GO" id="GO:0002753">
    <property type="term" value="P:cytoplasmic pattern recognition receptor signaling pathway"/>
    <property type="evidence" value="ECO:0000304"/>
    <property type="project" value="UniProtKB"/>
</dbReference>
<dbReference type="GO" id="GO:0051607">
    <property type="term" value="P:defense response to virus"/>
    <property type="evidence" value="ECO:0000314"/>
    <property type="project" value="UniProtKB"/>
</dbReference>
<dbReference type="GO" id="GO:0009597">
    <property type="term" value="P:detection of virus"/>
    <property type="evidence" value="ECO:0000304"/>
    <property type="project" value="BHF-UCL"/>
</dbReference>
<dbReference type="GO" id="GO:0045087">
    <property type="term" value="P:innate immune response"/>
    <property type="evidence" value="ECO:0000304"/>
    <property type="project" value="UniProtKB"/>
</dbReference>
<dbReference type="GO" id="GO:0039530">
    <property type="term" value="P:MDA-5 signaling pathway"/>
    <property type="evidence" value="ECO:0000314"/>
    <property type="project" value="UniProtKB"/>
</dbReference>
<dbReference type="GO" id="GO:0045071">
    <property type="term" value="P:negative regulation of viral genome replication"/>
    <property type="evidence" value="ECO:0000314"/>
    <property type="project" value="UniProtKB"/>
</dbReference>
<dbReference type="GO" id="GO:0032727">
    <property type="term" value="P:positive regulation of interferon-alpha production"/>
    <property type="evidence" value="ECO:0000315"/>
    <property type="project" value="UniProtKB"/>
</dbReference>
<dbReference type="GO" id="GO:0032728">
    <property type="term" value="P:positive regulation of interferon-beta production"/>
    <property type="evidence" value="ECO:0000314"/>
    <property type="project" value="UniProtKB"/>
</dbReference>
<dbReference type="GO" id="GO:0032755">
    <property type="term" value="P:positive regulation of interleukin-6 production"/>
    <property type="evidence" value="ECO:0000315"/>
    <property type="project" value="UniProtKB"/>
</dbReference>
<dbReference type="GO" id="GO:0060760">
    <property type="term" value="P:positive regulation of response to cytokine stimulus"/>
    <property type="evidence" value="ECO:0000315"/>
    <property type="project" value="UniProtKB"/>
</dbReference>
<dbReference type="GO" id="GO:0032760">
    <property type="term" value="P:positive regulation of tumor necrosis factor production"/>
    <property type="evidence" value="ECO:0000315"/>
    <property type="project" value="UniProtKB"/>
</dbReference>
<dbReference type="GO" id="GO:0051259">
    <property type="term" value="P:protein complex oligomerization"/>
    <property type="evidence" value="ECO:0007669"/>
    <property type="project" value="Ensembl"/>
</dbReference>
<dbReference type="GO" id="GO:0016925">
    <property type="term" value="P:protein sumoylation"/>
    <property type="evidence" value="ECO:0000314"/>
    <property type="project" value="UniProtKB"/>
</dbReference>
<dbReference type="GO" id="GO:0034344">
    <property type="term" value="P:regulation of type III interferon production"/>
    <property type="evidence" value="ECO:0000304"/>
    <property type="project" value="UniProtKB"/>
</dbReference>
<dbReference type="GO" id="GO:0009615">
    <property type="term" value="P:response to virus"/>
    <property type="evidence" value="ECO:0000314"/>
    <property type="project" value="UniProtKB"/>
</dbReference>
<dbReference type="GO" id="GO:0060337">
    <property type="term" value="P:type I interferon-mediated signaling pathway"/>
    <property type="evidence" value="ECO:0007669"/>
    <property type="project" value="Ensembl"/>
</dbReference>
<dbReference type="CDD" id="cd08818">
    <property type="entry name" value="CARD_MDA5_r1"/>
    <property type="match status" value="1"/>
</dbReference>
<dbReference type="CDD" id="cd08819">
    <property type="entry name" value="CARD_MDA5_r2"/>
    <property type="match status" value="1"/>
</dbReference>
<dbReference type="CDD" id="cd18074">
    <property type="entry name" value="DEXHc_RLR-2"/>
    <property type="match status" value="1"/>
</dbReference>
<dbReference type="CDD" id="cd15807">
    <property type="entry name" value="MDA5_C"/>
    <property type="match status" value="1"/>
</dbReference>
<dbReference type="CDD" id="cd12090">
    <property type="entry name" value="MDA5_ID"/>
    <property type="match status" value="1"/>
</dbReference>
<dbReference type="CDD" id="cd18802">
    <property type="entry name" value="SF2_C_dicer"/>
    <property type="match status" value="1"/>
</dbReference>
<dbReference type="FunFam" id="1.10.533.10:FF:000077">
    <property type="entry name" value="Interferon-induced helicase C domain-containing protein 1"/>
    <property type="match status" value="1"/>
</dbReference>
<dbReference type="FunFam" id="3.40.50.300:FF:000736">
    <property type="entry name" value="Interferon-induced helicase C domain-containing protein 1"/>
    <property type="match status" value="1"/>
</dbReference>
<dbReference type="FunFam" id="1.10.533.10:FF:000084">
    <property type="entry name" value="Interferon-induced with helicase C domain 1"/>
    <property type="match status" value="1"/>
</dbReference>
<dbReference type="FunFam" id="2.170.150.30:FF:000002">
    <property type="entry name" value="Interferon-induced with helicase C domain 1"/>
    <property type="match status" value="1"/>
</dbReference>
<dbReference type="FunFam" id="3.40.50.300:FF:000893">
    <property type="entry name" value="Interferon-induced with helicase C domain 1"/>
    <property type="match status" value="1"/>
</dbReference>
<dbReference type="Gene3D" id="1.20.1320.30">
    <property type="match status" value="1"/>
</dbReference>
<dbReference type="Gene3D" id="1.10.533.10">
    <property type="entry name" value="Death Domain, Fas"/>
    <property type="match status" value="2"/>
</dbReference>
<dbReference type="Gene3D" id="3.40.50.300">
    <property type="entry name" value="P-loop containing nucleotide triphosphate hydrolases"/>
    <property type="match status" value="2"/>
</dbReference>
<dbReference type="Gene3D" id="2.170.150.30">
    <property type="entry name" value="RIG-I-like receptor, C-terminal regulatory domain"/>
    <property type="match status" value="1"/>
</dbReference>
<dbReference type="InterPro" id="IPR031964">
    <property type="entry name" value="CARD_dom"/>
</dbReference>
<dbReference type="InterPro" id="IPR011029">
    <property type="entry name" value="DEATH-like_dom_sf"/>
</dbReference>
<dbReference type="InterPro" id="IPR006935">
    <property type="entry name" value="Helicase/UvrB_N"/>
</dbReference>
<dbReference type="InterPro" id="IPR014001">
    <property type="entry name" value="Helicase_ATP-bd"/>
</dbReference>
<dbReference type="InterPro" id="IPR001650">
    <property type="entry name" value="Helicase_C-like"/>
</dbReference>
<dbReference type="InterPro" id="IPR027417">
    <property type="entry name" value="P-loop_NTPase"/>
</dbReference>
<dbReference type="InterPro" id="IPR041204">
    <property type="entry name" value="RIG-I-like_C"/>
</dbReference>
<dbReference type="InterPro" id="IPR038557">
    <property type="entry name" value="RLR_C_sf"/>
</dbReference>
<dbReference type="InterPro" id="IPR021673">
    <property type="entry name" value="RLR_CTR"/>
</dbReference>
<dbReference type="InterPro" id="IPR051363">
    <property type="entry name" value="RLR_Helicase"/>
</dbReference>
<dbReference type="PANTHER" id="PTHR14074">
    <property type="entry name" value="HELICASE WITH DEATH DOMAIN-RELATED"/>
    <property type="match status" value="1"/>
</dbReference>
<dbReference type="PANTHER" id="PTHR14074:SF14">
    <property type="entry name" value="INTERFERON-INDUCED HELICASE C DOMAIN-CONTAINING PROTEIN 1"/>
    <property type="match status" value="1"/>
</dbReference>
<dbReference type="Pfam" id="PF16739">
    <property type="entry name" value="CARD_2"/>
    <property type="match status" value="2"/>
</dbReference>
<dbReference type="Pfam" id="PF00271">
    <property type="entry name" value="Helicase_C"/>
    <property type="match status" value="1"/>
</dbReference>
<dbReference type="Pfam" id="PF04851">
    <property type="entry name" value="ResIII"/>
    <property type="match status" value="1"/>
</dbReference>
<dbReference type="Pfam" id="PF18119">
    <property type="entry name" value="RIG-I_C"/>
    <property type="match status" value="1"/>
</dbReference>
<dbReference type="Pfam" id="PF11648">
    <property type="entry name" value="RIG-I_C-RD"/>
    <property type="match status" value="1"/>
</dbReference>
<dbReference type="SMART" id="SM00487">
    <property type="entry name" value="DEXDc"/>
    <property type="match status" value="1"/>
</dbReference>
<dbReference type="SMART" id="SM00490">
    <property type="entry name" value="HELICc"/>
    <property type="match status" value="1"/>
</dbReference>
<dbReference type="SUPFAM" id="SSF52540">
    <property type="entry name" value="P-loop containing nucleoside triphosphate hydrolases"/>
    <property type="match status" value="2"/>
</dbReference>
<dbReference type="PROSITE" id="PS51192">
    <property type="entry name" value="HELICASE_ATP_BIND_1"/>
    <property type="match status" value="1"/>
</dbReference>
<dbReference type="PROSITE" id="PS51194">
    <property type="entry name" value="HELICASE_CTER"/>
    <property type="match status" value="1"/>
</dbReference>
<dbReference type="PROSITE" id="PS51789">
    <property type="entry name" value="RLR_CTR"/>
    <property type="match status" value="1"/>
</dbReference>
<comment type="function">
    <text evidence="9 19 24 31 32 34 45 46 48 52 53 54">Innate immune receptor which acts as a cytoplasmic sensor of viral nucleic acids and plays a major role in sensing viral infection and in the activation of a cascade of antiviral responses including the induction of type I interferons and pro-inflammatory cytokines (PubMed:28594402, PubMed:32169843, PubMed:33727702). Its ligands include mRNA lacking 2'-O-methylation at their 5' cap and long-dsRNA (&gt;1 kb in length) (PubMed:22160685). Upon ligand binding it associates with mitochondria antiviral signaling protein (MAVS/IPS1) which activates the IKK-related kinases: TBK1 and IKBKE which phosphorylate interferon regulatory factors: IRF3 and IRF7 which in turn activate transcription of antiviral immunological genes, including interferons (IFNs); IFN-alpha and IFN-beta. Responsible for detecting the Picornaviridae family members such as encephalomyocarditis virus (EMCV), mengo encephalomyocarditis virus (ENMG), and rhinovirus (PubMed:28606988). Detects coronavirus SARS-CoV-2 (PubMed:33440148, PubMed:33514628). Can also detect other viruses such as dengue virus (DENV), west Nile virus (WNV), and reovirus. Also involved in antiviral signaling in response to viruses containing a dsDNA genome, such as vaccinia virus. Plays an important role in amplifying innate immune signaling through recognition of RNA metabolites that are produced during virus infection by ribonuclease L (RNase L). May play an important role in enhancing natural killer cell function and may be involved in growth inhibition and apoptosis in several tumor cell lines.</text>
</comment>
<comment type="catalytic activity">
    <reaction evidence="19 34">
        <text>ATP + H2O = ADP + phosphate + H(+)</text>
        <dbReference type="Rhea" id="RHEA:13065"/>
        <dbReference type="ChEBI" id="CHEBI:15377"/>
        <dbReference type="ChEBI" id="CHEBI:15378"/>
        <dbReference type="ChEBI" id="CHEBI:30616"/>
        <dbReference type="ChEBI" id="CHEBI:43474"/>
        <dbReference type="ChEBI" id="CHEBI:456216"/>
        <dbReference type="EC" id="3.6.4.13"/>
    </reaction>
    <physiologicalReaction direction="left-to-right" evidence="59 60">
        <dbReference type="Rhea" id="RHEA:13066"/>
    </physiologicalReaction>
</comment>
<comment type="subunit">
    <text evidence="12 13 14 17 18 20 22 25 27 29 30 33 34 37 43 49 54">Monomer in the absence of ligands and homodimerizes in the presence of dsRNA ligands. Can assemble into helical or linear polymeric filaments on long dsRNA (PubMed:33727702). Interacts with MAVS/IPS1. Interacts (via the CARD domains) with TKFC, the interaction is inhibited by viral infection (PubMed:17600090). Interacts with PCBP2. Interacts with NLRC5. Interacts with PIAS2-beta. Interacts with DDX60. Interacts with ANKRD17. Interacts with IKBKE (PubMed:17600090). Interacts with ATG5 and ATG12, either as ATG5 and ATG12 monomers or as ATG12-ATG5 conjugates (PubMed:17709747). Interacts with ZCCHC3; leading to activate IFIH1/MDA5 (PubMed:30193849). Interacts with RNF123 (PubMed:27312109). Interacts with DDX3X (PubMed:20127681). Interacts with NOD1; this interaction promotes transcription of antiviral genes and inhibition of viral replication (PubMed:32169843). Interacts with ECSIT; this interaction bridges IFIH1 to the MAVS complex at the mitochondrion (PubMed:25228397).</text>
</comment>
<comment type="subunit">
    <text evidence="12">(Microbial infection) Interacts with V protein of paramyxoviruses; these interactions prevent IFN-beta induction, and subsequent establishment of an antiviral state.</text>
</comment>
<comment type="subunit">
    <text evidence="35">(Microbial infection) Interacts with herpes simplex virus 1 protein US11; this interaction prevents the interaction of MAVS/IPS1 to IFIH1.</text>
</comment>
<comment type="subunit">
    <text evidence="50">(Microbial infection) Interacts with Encephalomyocarditis virus protein 2C; this interaction inhibits the induction of the IFN-beta signal pathway.</text>
</comment>
<comment type="subunit">
    <text evidence="44">(Microbial infection) Interacts with protease 3C of coxsackievirus A16; this interaction inhibits IFIH1 thereby attenuating type-I IFN production.</text>
</comment>
<comment type="subunit">
    <text evidence="54">(Microbial infection) Interacts with SARS-COV-2 virus protein NSP3; the interaction antagonizes ISG15-dependent IFIH1 activation via active de-ISGylation.</text>
</comment>
<comment type="subunit">
    <text evidence="21">(Microbial infection) Interacts with measles V protein; this interaction is involved in the inhibition of the host type I interferon signaling pathway by the virus.</text>
</comment>
<comment type="interaction">
    <interactant intactId="EBI-6115771">
        <id>Q9BYX4</id>
    </interactant>
    <interactant intactId="EBI-52363471">
        <id>Q676U5-1</id>
        <label>ATG16L1</label>
    </interactant>
    <organismsDiffer>false</organismsDiffer>
    <experiments>2</experiments>
</comment>
<comment type="interaction">
    <interactant intactId="EBI-6115771">
        <id>Q9BYX4</id>
    </interactant>
    <interactant intactId="EBI-6115771">
        <id>Q9BYX4</id>
        <label>IFIH1</label>
    </interactant>
    <organismsDiffer>false</organismsDiffer>
    <experiments>6</experiments>
</comment>
<comment type="interaction">
    <interactant intactId="EBI-6115771">
        <id>Q9BYX4</id>
    </interactant>
    <interactant intactId="EBI-307369">
        <id>Q14164</id>
        <label>IKBKE</label>
    </interactant>
    <organismsDiffer>false</organismsDiffer>
    <experiments>2</experiments>
</comment>
<comment type="interaction">
    <interactant intactId="EBI-6115771">
        <id>Q9BYX4</id>
    </interactant>
    <interactant intactId="EBI-746466">
        <id>P05161</id>
        <label>ISG15</label>
    </interactant>
    <organismsDiffer>false</organismsDiffer>
    <experiments>7</experiments>
</comment>
<comment type="interaction">
    <interactant intactId="EBI-6115771">
        <id>Q9BYX4</id>
    </interactant>
    <interactant intactId="EBI-751001">
        <id>Q14145</id>
        <label>KEAP1</label>
    </interactant>
    <organismsDiffer>false</organismsDiffer>
    <experiments>3</experiments>
</comment>
<comment type="interaction">
    <interactant intactId="EBI-6115771">
        <id>Q9BYX4</id>
    </interactant>
    <interactant intactId="EBI-995373">
        <id>Q7Z434</id>
        <label>MAVS</label>
    </interactant>
    <organismsDiffer>false</organismsDiffer>
    <experiments>7</experiments>
</comment>
<comment type="interaction">
    <interactant intactId="EBI-6115771">
        <id>Q9BYX4</id>
    </interactant>
    <interactant intactId="EBI-15577799">
        <id>Q7Z434-1</id>
        <label>MAVS</label>
    </interactant>
    <organismsDiffer>false</organismsDiffer>
    <experiments>3</experiments>
</comment>
<comment type="interaction">
    <interactant intactId="EBI-6115771">
        <id>Q9BYX4</id>
    </interactant>
    <interactant intactId="EBI-713955">
        <id>O75569</id>
        <label>PRKRA</label>
    </interactant>
    <organismsDiffer>false</organismsDiffer>
    <experiments>4</experiments>
</comment>
<comment type="interaction">
    <interactant intactId="EBI-6115771">
        <id>Q9BYX4</id>
    </interactant>
    <interactant intactId="EBI-1047061">
        <id>O14730</id>
        <label>RIOK3</label>
    </interactant>
    <organismsDiffer>false</organismsDiffer>
    <experiments>6</experiments>
</comment>
<comment type="interaction">
    <interactant intactId="EBI-6115771">
        <id>Q9BYX4</id>
    </interactant>
    <interactant intactId="EBI-2339208">
        <id>Q96EQ8</id>
        <label>RNF125</label>
    </interactant>
    <organismsDiffer>false</organismsDiffer>
    <experiments>2</experiments>
</comment>
<comment type="interaction">
    <interactant intactId="EBI-6115771">
        <id>Q9BYX4</id>
    </interactant>
    <interactant intactId="EBI-4291069">
        <id>Q3LXA3</id>
        <label>TKFC</label>
    </interactant>
    <organismsDiffer>false</organismsDiffer>
    <experiments>5</experiments>
</comment>
<comment type="interaction">
    <interactant intactId="EBI-6115771">
        <id>Q9BYX4</id>
    </interactant>
    <interactant intactId="EBI-25475853">
        <id>P0DTC5</id>
        <label>M</label>
    </interactant>
    <organismsDiffer>true</organismsDiffer>
    <experiments>3</experiments>
</comment>
<comment type="interaction">
    <interactant intactId="EBI-6115771">
        <id>Q9BYX4</id>
    </interactant>
    <interactant intactId="EBI-3650423">
        <id>P0C774</id>
        <label>P/V</label>
    </interactant>
    <organismsDiffer>true</organismsDiffer>
    <experiments>3</experiments>
</comment>
<comment type="interaction">
    <interactant intactId="EBI-6115771">
        <id>Q9BYX4</id>
    </interactant>
    <interactant intactId="EBI-6148694">
        <id>P11207</id>
        <label>P/V</label>
    </interactant>
    <organismsDiffer>true</organismsDiffer>
    <experiments>3</experiments>
</comment>
<comment type="interaction">
    <interactant intactId="EBI-6115771">
        <id>Q9BYX4</id>
    </interactant>
    <interactant intactId="EBI-6599165">
        <id>P30927</id>
        <label>P/V</label>
    </interactant>
    <organismsDiffer>true</organismsDiffer>
    <experiments>2</experiments>
</comment>
<comment type="interaction">
    <interactant intactId="EBI-6115771">
        <id>Q9BYX4</id>
    </interactant>
    <interactant intactId="EBI-6598728">
        <id>Q9EMA9</id>
        <label>P/V</label>
    </interactant>
    <organismsDiffer>true</organismsDiffer>
    <experiments>2</experiments>
</comment>
<comment type="interaction">
    <interactant intactId="EBI-6115771">
        <id>Q9BYX4</id>
    </interactant>
    <interactant intactId="EBI-25492388">
        <id>PRO_0000449621</id>
        <label>rep</label>
        <dbReference type="UniProtKB" id="P0DTD1"/>
    </interactant>
    <organismsDiffer>true</organismsDiffer>
    <experiments>2</experiments>
</comment>
<comment type="interaction">
    <interactant intactId="EBI-6115771">
        <id>Q9BYX4</id>
    </interactant>
    <interactant intactId="EBI-6150681">
        <id>P04487</id>
        <label>US11</label>
    </interactant>
    <organismsDiffer>true</organismsDiffer>
    <experiments>4</experiments>
</comment>
<comment type="subcellular location">
    <subcellularLocation>
        <location evidence="7 9 51 54">Cytoplasm</location>
    </subcellularLocation>
    <subcellularLocation>
        <location evidence="58">Nucleus</location>
    </subcellularLocation>
    <subcellularLocation>
        <location evidence="54">Mitochondrion</location>
    </subcellularLocation>
    <text>Upon viral RNA stimulation and ISGylation, translocates from cytosol to mitochondrion. May be found in the nucleus, during apoptosis.</text>
</comment>
<comment type="alternative products">
    <event type="alternative splicing"/>
    <isoform>
        <id>Q9BYX4-1</id>
        <name>1</name>
        <sequence type="displayed"/>
    </isoform>
    <isoform>
        <id>Q9BYX4-2</id>
        <name>2</name>
        <sequence type="described" ref="VSP_013337 VSP_013338"/>
    </isoform>
</comment>
<comment type="tissue specificity">
    <text evidence="7 8 9">Widely expressed, at a low level. Expression is detected at slightly highest levels in placenta, pancreas and spleen and at barely levels in detectable brain, testis and lung.</text>
</comment>
<comment type="induction">
    <text evidence="7">By interferon (IFN) and TNF.</text>
</comment>
<comment type="PTM">
    <text evidence="30">Sumoylated. Sumoylation positively regulates its role in type I interferon induction and is enhanced by PIAS2-beta.</text>
</comment>
<comment type="PTM">
    <text evidence="16 28 45 48 49">Ubiquitinated by RNF125, leading to its degradation by the proteasome (PubMed:17460044). USP17/UPS17L2-dependent deubiquitination positively regulates the receptor (PubMed:20368735). Ubiquitinated by TRIM25 via 'Lys-63'-linked ubiquitination, promoting activation of IFIH1/MDA5 (PubMed:30193849). Ubiquitinated by TRIM40 via 'Lys-48'-linked ubiquitination; leading to proteasomal degradation (PubMed:29117565). Ubiquitinated by TRIM65 via 'Lys-63'-linked ubiquitination, promoting activation of IFIH1/MDA5 (PubMed:28594402).</text>
</comment>
<comment type="PTM">
    <text evidence="54">ISGylated by ISG15. ISGylation increases upon infection with dengue (DENV) or Zika (ZIKV) viruses. ISGylation at Lys-23 and Lys-43 is dependent of dephosphorylation at Ser-88, regulates mitochondrial translocation and oligomerization. Essential for IFIH1/MDA5-mediated cytokine responses and restriction of virus replication.</text>
</comment>
<comment type="PTM">
    <text evidence="36 54">Phosphorylated at Ser-88 (PubMed:23499489, PubMed:33727702). Dephosphorylated by phosphatases PPP11CA/PPP11CC; dephosphorylation precedes and is required for ISGylation (PubMed:23499489, PubMed:33727702).</text>
</comment>
<comment type="PTM">
    <text evidence="2">During apoptosis, processed into 3 cleavage products. The helicase-containing fragment, once liberated from the CARD domains, translocate from the cytoplasm to the nucleus. The processed protein significantly sensitizes cells to DNA degradation.</text>
</comment>
<comment type="PTM">
    <text evidence="38">(Microbial infection) Cleaved and inactivated by the protease 2A of coxsackievirus B3, poliovirus and enterovirus 71 allowing the virus to disrupt the host type I interferon production.</text>
</comment>
<comment type="disease" evidence="15">
    <disease id="DI-02778">
        <name>Type 1 diabetes mellitus 19</name>
        <acronym>T1D19</acronym>
        <description>A multifactorial disorder of glucose homeostasis that is characterized by susceptibility to ketoacidosis in the absence of insulin therapy. Clinical features are polydipsia, polyphagia and polyuria which result from hyperglycemia-induced osmotic diuresis and secondary thirst. These derangements result in long-term complications that affect the eyes, kidneys, nerves, and blood vessels.</description>
        <dbReference type="MIM" id="610155"/>
    </disease>
    <text>Disease susceptibility may be associated with variants affecting the gene represented in this entry.</text>
</comment>
<comment type="disease">
    <text evidence="23 26">IFIH1 is the CADM-140 autoantigen, involved in clinically amyopathic dermatomyositis (CADM). This is a chronic inflammatory disorder that shows typical skin manifestations of dermatomyositis but has no or little evidence of clinical myositis. Anti-CADM-140 antibodies appear to be specific to dermatomyositis, especially CADM. Patients with anti-CADM-140 antibodies frequently develop life-threatening acute progressive interstitial lung disease (ILD).</text>
</comment>
<comment type="disease" evidence="39 40">
    <disease id="DI-04126">
        <name>Aicardi-Goutieres syndrome 7</name>
        <acronym>AGS7</acronym>
        <description>A form of Aicardi-Goutieres syndrome, a genetically heterogeneous disease characterized by cerebral atrophy, leukoencephalopathy, intracranial calcifications, chronic cerebrospinal fluid (CSF) lymphocytosis, increased CSF alpha-interferon, and negative serologic investigations for common prenatal infection. Clinical features as thrombocytopenia, hepatosplenomegaly and elevated hepatic transaminases along with intermittent fever may erroneously suggest an infective process. Severe neurological dysfunctions manifest in infancy as progressive microcephaly, spasticity, dystonic posturing and profound psychomotor retardation. Death often occurs in early childhood.</description>
        <dbReference type="MIM" id="615846"/>
    </disease>
    <text>The disease is caused by variants affecting the gene represented in this entry.</text>
</comment>
<comment type="disease" evidence="41">
    <disease id="DI-04386">
        <name>Singleton-Merten syndrome 1</name>
        <acronym>SGMRT1</acronym>
        <description>An autosomal dominant disorder with variable expression. Core features are marked aortic calcification, dental anomalies, osteopenia, acro-osteolysis, and to a lesser extent glaucoma, psoriasis, muscle weakness, and joint laxity. Dental anomalies include delayed eruption and immature root formation of anterior permanent teeth, early loss of permanent teeth due to short roots, acute root resorption, high caries, and aggressive alveolar bone loss. Additional clinical manifestations include particular facial characteristics and abnormal joint and muscle ligaments.</description>
        <dbReference type="MIM" id="182250"/>
    </disease>
    <text>The disease is caused by variants affecting the gene represented in this entry.</text>
</comment>
<comment type="disease" evidence="46 47">
    <disease id="DI-06358">
        <name>Immunodeficiency 95</name>
        <acronym>IMD95</acronym>
        <description>An autosomal recessive disorder characterized by the onset of recurrent and severe viral respiratory infections in infancy or early childhood, and impaired interferon production during viral infection.</description>
        <dbReference type="MIM" id="619773"/>
    </disease>
    <text>The disease is caused by variants affecting the gene represented in this entry.</text>
</comment>
<comment type="miscellaneous">
    <text>In HIV-1 infected HeLa-CD4 cells, overexpression of IFIH1 results in a great increase in the level of secreted viral p24 protein.</text>
</comment>
<comment type="similarity">
    <text evidence="58">Belongs to the helicase family. RLR subfamily.</text>
</comment>
<comment type="sequence caution" evidence="58">
    <conflict type="miscellaneous discrepancy">
        <sequence resource="EMBL-CDS" id="AAH78180"/>
    </conflict>
    <text>Contaminating sequence. Potential poly-A sequence.</text>
</comment>
<comment type="sequence caution" evidence="58">
    <conflict type="erroneous initiation">
        <sequence resource="EMBL-CDS" id="BAB71141"/>
    </conflict>
    <text>Truncated N-terminus.</text>
</comment>
<evidence type="ECO:0000250" key="1"/>
<evidence type="ECO:0000250" key="2">
    <source>
        <dbReference type="UniProtKB" id="Q8R5F7"/>
    </source>
</evidence>
<evidence type="ECO:0000255" key="3">
    <source>
        <dbReference type="PROSITE-ProRule" id="PRU00541"/>
    </source>
</evidence>
<evidence type="ECO:0000255" key="4">
    <source>
        <dbReference type="PROSITE-ProRule" id="PRU00542"/>
    </source>
</evidence>
<evidence type="ECO:0000255" key="5">
    <source>
        <dbReference type="PROSITE-ProRule" id="PRU01125"/>
    </source>
</evidence>
<evidence type="ECO:0000256" key="6">
    <source>
        <dbReference type="SAM" id="MobiDB-lite"/>
    </source>
</evidence>
<evidence type="ECO:0000269" key="7">
    <source>
    </source>
</evidence>
<evidence type="ECO:0000269" key="8">
    <source>
    </source>
</evidence>
<evidence type="ECO:0000269" key="9">
    <source>
    </source>
</evidence>
<evidence type="ECO:0000269" key="10">
    <source>
    </source>
</evidence>
<evidence type="ECO:0000269" key="11">
    <source>
    </source>
</evidence>
<evidence type="ECO:0000269" key="12">
    <source>
    </source>
</evidence>
<evidence type="ECO:0000269" key="13">
    <source>
    </source>
</evidence>
<evidence type="ECO:0000269" key="14">
    <source>
    </source>
</evidence>
<evidence type="ECO:0000269" key="15">
    <source>
    </source>
</evidence>
<evidence type="ECO:0000269" key="16">
    <source>
    </source>
</evidence>
<evidence type="ECO:0000269" key="17">
    <source>
    </source>
</evidence>
<evidence type="ECO:0000269" key="18">
    <source>
    </source>
</evidence>
<evidence type="ECO:0000269" key="19">
    <source>
    </source>
</evidence>
<evidence type="ECO:0000269" key="20">
    <source>
    </source>
</evidence>
<evidence type="ECO:0000269" key="21">
    <source>
    </source>
</evidence>
<evidence type="ECO:0000269" key="22">
    <source>
    </source>
</evidence>
<evidence type="ECO:0000269" key="23">
    <source>
    </source>
</evidence>
<evidence type="ECO:0000269" key="24">
    <source>
    </source>
</evidence>
<evidence type="ECO:0000269" key="25">
    <source>
    </source>
</evidence>
<evidence type="ECO:0000269" key="26">
    <source>
    </source>
</evidence>
<evidence type="ECO:0000269" key="27">
    <source>
    </source>
</evidence>
<evidence type="ECO:0000269" key="28">
    <source>
    </source>
</evidence>
<evidence type="ECO:0000269" key="29">
    <source>
    </source>
</evidence>
<evidence type="ECO:0000269" key="30">
    <source>
    </source>
</evidence>
<evidence type="ECO:0000269" key="31">
    <source>
    </source>
</evidence>
<evidence type="ECO:0000269" key="32">
    <source>
    </source>
</evidence>
<evidence type="ECO:0000269" key="33">
    <source>
    </source>
</evidence>
<evidence type="ECO:0000269" key="34">
    <source>
    </source>
</evidence>
<evidence type="ECO:0000269" key="35">
    <source>
    </source>
</evidence>
<evidence type="ECO:0000269" key="36">
    <source>
    </source>
</evidence>
<evidence type="ECO:0000269" key="37">
    <source>
    </source>
</evidence>
<evidence type="ECO:0000269" key="38">
    <source>
    </source>
</evidence>
<evidence type="ECO:0000269" key="39">
    <source>
    </source>
</evidence>
<evidence type="ECO:0000269" key="40">
    <source>
    </source>
</evidence>
<evidence type="ECO:0000269" key="41">
    <source>
    </source>
</evidence>
<evidence type="ECO:0000269" key="42">
    <source>
    </source>
</evidence>
<evidence type="ECO:0000269" key="43">
    <source>
    </source>
</evidence>
<evidence type="ECO:0000269" key="44">
    <source>
    </source>
</evidence>
<evidence type="ECO:0000269" key="45">
    <source>
    </source>
</evidence>
<evidence type="ECO:0000269" key="46">
    <source>
    </source>
</evidence>
<evidence type="ECO:0000269" key="47">
    <source>
    </source>
</evidence>
<evidence type="ECO:0000269" key="48">
    <source>
    </source>
</evidence>
<evidence type="ECO:0000269" key="49">
    <source>
    </source>
</evidence>
<evidence type="ECO:0000269" key="50">
    <source>
    </source>
</evidence>
<evidence type="ECO:0000269" key="51">
    <source>
    </source>
</evidence>
<evidence type="ECO:0000269" key="52">
    <source>
    </source>
</evidence>
<evidence type="ECO:0000269" key="53">
    <source>
    </source>
</evidence>
<evidence type="ECO:0000269" key="54">
    <source>
    </source>
</evidence>
<evidence type="ECO:0000303" key="55">
    <source>
    </source>
</evidence>
<evidence type="ECO:0000303" key="56">
    <source>
    </source>
</evidence>
<evidence type="ECO:0000303" key="57">
    <source>
    </source>
</evidence>
<evidence type="ECO:0000305" key="58"/>
<evidence type="ECO:0000305" key="59">
    <source>
    </source>
</evidence>
<evidence type="ECO:0000305" key="60">
    <source>
    </source>
</evidence>
<evidence type="ECO:0000312" key="61">
    <source>
        <dbReference type="HGNC" id="HGNC:18873"/>
    </source>
</evidence>
<evidence type="ECO:0007829" key="62">
    <source>
        <dbReference type="PDB" id="3B6E"/>
    </source>
</evidence>
<evidence type="ECO:0007829" key="63">
    <source>
        <dbReference type="PDB" id="3GA3"/>
    </source>
</evidence>
<evidence type="ECO:0007829" key="64">
    <source>
        <dbReference type="PDB" id="7DNI"/>
    </source>
</evidence>